<proteinExistence type="evidence at protein level"/>
<accession>P40302</accession>
<accession>D6W0E1</accession>
<gene>
    <name type="primary">PRE5</name>
    <name type="ordered locus">YMR314W</name>
    <name type="ORF">YM9924.06</name>
</gene>
<comment type="function">
    <text>The proteasome degrades poly-ubiquitinated proteins in the cytoplasm and in the nucleus. It is essential for the regulated turnover of proteins and for the removal of misfolded proteins. The proteasome is a multicatalytic proteinase complex that is characterized by its ability to cleave peptides with Arg, Phe, Tyr, Leu, and Glu adjacent to the leaving group at neutral or slightly basic pH. It has an ATP-dependent proteolytic activity.</text>
</comment>
<comment type="subunit">
    <text evidence="3">The 26S proteasome consists of a 20S proteasome core and two 19S regulatory subunits. The 20S proteasome core is composed of 28 subunits that are arranged in four stacked rings, resulting in a barrel-shaped structure. The two end rings are each formed by seven alpha subunits, and the two central rings are each formed by seven beta subunits. The catalytic chamber with the active sites is on the inside of the barrel.</text>
</comment>
<comment type="interaction">
    <interactant intactId="EBI-13955">
        <id>P40302</id>
    </interactant>
    <interactant intactId="EBI-2343020">
        <id>Q12245</id>
        <label>POC4</label>
    </interactant>
    <organismsDiffer>false</organismsDiffer>
    <experiments>2</experiments>
</comment>
<comment type="interaction">
    <interactant intactId="EBI-13955">
        <id>P40302</id>
    </interactant>
    <interactant intactId="EBI-13963">
        <id>P21242</id>
        <label>PRE10</label>
    </interactant>
    <organismsDiffer>false</organismsDiffer>
    <experiments>3</experiments>
</comment>
<comment type="interaction">
    <interactant intactId="EBI-13955">
        <id>P40302</id>
    </interactant>
    <interactant intactId="EBI-14001">
        <id>P30656</id>
        <label>PRE2</label>
    </interactant>
    <organismsDiffer>false</organismsDiffer>
    <experiments>3</experiments>
</comment>
<comment type="interaction">
    <interactant intactId="EBI-13955">
        <id>P40302</id>
    </interactant>
    <interactant intactId="EBI-11219">
        <id>P43588</id>
        <label>RPN11</label>
    </interactant>
    <organismsDiffer>false</organismsDiffer>
    <experiments>2</experiments>
</comment>
<comment type="subcellular location">
    <subcellularLocation>
        <location>Cytoplasm</location>
    </subcellularLocation>
    <subcellularLocation>
        <location>Nucleus</location>
    </subcellularLocation>
</comment>
<comment type="miscellaneous">
    <text evidence="2">Present with 7210 molecules/cell in log phase SD medium.</text>
</comment>
<comment type="similarity">
    <text evidence="1">Belongs to the peptidase T1A family.</text>
</comment>
<sequence>MFRNNYDGDTVTFSPTGRLFQVEYALEAIKQGSVTVGLRSNTHAVLVALKRNADELSSYQKKIIKCDEHMGLSLAGLAPDARVLSNYLRQQCNYSSLVFNRKLAVERAGHLLCDKAQKNTQSYGGRPYGVGLLIIGYDKSGAHLLEFQPSGNVTELYGTAIGARSQGAKTYLERTLDTFIKIDGNPDELIKAGVEAISQSLRDESLTVDNLSIAIVGKDTPFTIYDGEAVAKYI</sequence>
<reference key="1">
    <citation type="journal article" date="1994" name="Biochemistry">
        <title>PRE5 and PRE6, the last missing genes encoding 20S proteasome subunits from yeast? Indication for a set of 14 different subunits in the eukaryotic proteasome core.</title>
        <authorList>
            <person name="Heinemeyer W."/>
            <person name="Troendle N."/>
            <person name="Albrecht G."/>
            <person name="Wolf D.H."/>
        </authorList>
    </citation>
    <scope>NUCLEOTIDE SEQUENCE [GENOMIC DNA]</scope>
    <scope>PROTEIN SEQUENCE OF 141-149 AND 220-228</scope>
    <source>
        <strain>ATCC 204508 / S288c</strain>
    </source>
</reference>
<reference key="2">
    <citation type="journal article" date="1997" name="Nature">
        <title>The nucleotide sequence of Saccharomyces cerevisiae chromosome XIII.</title>
        <authorList>
            <person name="Bowman S."/>
            <person name="Churcher C.M."/>
            <person name="Badcock K."/>
            <person name="Brown D."/>
            <person name="Chillingworth T."/>
            <person name="Connor R."/>
            <person name="Dedman K."/>
            <person name="Devlin K."/>
            <person name="Gentles S."/>
            <person name="Hamlin N."/>
            <person name="Hunt S."/>
            <person name="Jagels K."/>
            <person name="Lye G."/>
            <person name="Moule S."/>
            <person name="Odell C."/>
            <person name="Pearson D."/>
            <person name="Rajandream M.A."/>
            <person name="Rice P."/>
            <person name="Skelton J."/>
            <person name="Walsh S.V."/>
            <person name="Whitehead S."/>
            <person name="Barrell B.G."/>
        </authorList>
    </citation>
    <scope>NUCLEOTIDE SEQUENCE [LARGE SCALE GENOMIC DNA]</scope>
    <source>
        <strain>ATCC 204508 / S288c</strain>
    </source>
</reference>
<reference key="3">
    <citation type="journal article" date="2014" name="G3 (Bethesda)">
        <title>The reference genome sequence of Saccharomyces cerevisiae: Then and now.</title>
        <authorList>
            <person name="Engel S.R."/>
            <person name="Dietrich F.S."/>
            <person name="Fisk D.G."/>
            <person name="Binkley G."/>
            <person name="Balakrishnan R."/>
            <person name="Costanzo M.C."/>
            <person name="Dwight S.S."/>
            <person name="Hitz B.C."/>
            <person name="Karra K."/>
            <person name="Nash R.S."/>
            <person name="Weng S."/>
            <person name="Wong E.D."/>
            <person name="Lloyd P."/>
            <person name="Skrzypek M.S."/>
            <person name="Miyasato S.R."/>
            <person name="Simison M."/>
            <person name="Cherry J.M."/>
        </authorList>
    </citation>
    <scope>GENOME REANNOTATION</scope>
    <source>
        <strain>ATCC 204508 / S288c</strain>
    </source>
</reference>
<reference key="4">
    <citation type="journal article" date="2007" name="Genome Res.">
        <title>Approaching a complete repository of sequence-verified protein-encoding clones for Saccharomyces cerevisiae.</title>
        <authorList>
            <person name="Hu Y."/>
            <person name="Rolfs A."/>
            <person name="Bhullar B."/>
            <person name="Murthy T.V.S."/>
            <person name="Zhu C."/>
            <person name="Berger M.F."/>
            <person name="Camargo A.A."/>
            <person name="Kelley F."/>
            <person name="McCarron S."/>
            <person name="Jepson D."/>
            <person name="Richardson A."/>
            <person name="Raphael J."/>
            <person name="Moreira D."/>
            <person name="Taycher E."/>
            <person name="Zuo D."/>
            <person name="Mohr S."/>
            <person name="Kane M.F."/>
            <person name="Williamson J."/>
            <person name="Simpson A.J.G."/>
            <person name="Bulyk M.L."/>
            <person name="Harlow E."/>
            <person name="Marsischky G."/>
            <person name="Kolodner R.D."/>
            <person name="LaBaer J."/>
        </authorList>
    </citation>
    <scope>NUCLEOTIDE SEQUENCE [GENOMIC DNA]</scope>
    <source>
        <strain>ATCC 204508 / S288c</strain>
    </source>
</reference>
<reference key="5">
    <citation type="journal article" date="2003" name="Nature">
        <title>Global analysis of protein expression in yeast.</title>
        <authorList>
            <person name="Ghaemmaghami S."/>
            <person name="Huh W.-K."/>
            <person name="Bower K."/>
            <person name="Howson R.W."/>
            <person name="Belle A."/>
            <person name="Dephoure N."/>
            <person name="O'Shea E.K."/>
            <person name="Weissman J.S."/>
        </authorList>
    </citation>
    <scope>LEVEL OF PROTEIN EXPRESSION [LARGE SCALE ANALYSIS]</scope>
</reference>
<reference key="6">
    <citation type="journal article" date="2007" name="J. Proteome Res.">
        <title>Large-scale phosphorylation analysis of alpha-factor-arrested Saccharomyces cerevisiae.</title>
        <authorList>
            <person name="Li X."/>
            <person name="Gerber S.A."/>
            <person name="Rudner A.D."/>
            <person name="Beausoleil S.A."/>
            <person name="Haas W."/>
            <person name="Villen J."/>
            <person name="Elias J.E."/>
            <person name="Gygi S.P."/>
        </authorList>
    </citation>
    <scope>PHOSPHORYLATION [LARGE SCALE ANALYSIS] AT SER-14</scope>
    <scope>IDENTIFICATION BY MASS SPECTROMETRY [LARGE SCALE ANALYSIS]</scope>
    <source>
        <strain>ADR376</strain>
    </source>
</reference>
<reference key="7">
    <citation type="journal article" date="2008" name="Mol. Cell. Proteomics">
        <title>A multidimensional chromatography technology for in-depth phosphoproteome analysis.</title>
        <authorList>
            <person name="Albuquerque C.P."/>
            <person name="Smolka M.B."/>
            <person name="Payne S.H."/>
            <person name="Bafna V."/>
            <person name="Eng J."/>
            <person name="Zhou H."/>
        </authorList>
    </citation>
    <scope>IDENTIFICATION BY MASS SPECTROMETRY [LARGE SCALE ANALYSIS]</scope>
</reference>
<reference key="8">
    <citation type="journal article" date="2009" name="Science">
        <title>Global analysis of Cdk1 substrate phosphorylation sites provides insights into evolution.</title>
        <authorList>
            <person name="Holt L.J."/>
            <person name="Tuch B.B."/>
            <person name="Villen J."/>
            <person name="Johnson A.D."/>
            <person name="Gygi S.P."/>
            <person name="Morgan D.O."/>
        </authorList>
    </citation>
    <scope>PHOSPHORYLATION [LARGE SCALE ANALYSIS] AT SER-14</scope>
    <scope>IDENTIFICATION BY MASS SPECTROMETRY [LARGE SCALE ANALYSIS]</scope>
</reference>
<reference key="9">
    <citation type="journal article" date="2012" name="Proteomics">
        <title>Sites of ubiquitin attachment in Saccharomyces cerevisiae.</title>
        <authorList>
            <person name="Starita L.M."/>
            <person name="Lo R.S."/>
            <person name="Eng J.K."/>
            <person name="von Haller P.D."/>
            <person name="Fields S."/>
        </authorList>
    </citation>
    <scope>UBIQUITINATION [LARGE SCALE ANALYSIS] AT LYS-191</scope>
    <scope>IDENTIFICATION BY MASS SPECTROMETRY [LARGE SCALE ANALYSIS]</scope>
</reference>
<reference key="10">
    <citation type="journal article" date="1997" name="Nature">
        <title>Structure of 20S proteasome from yeast at 2.4-A resolution.</title>
        <authorList>
            <person name="Groll M."/>
            <person name="Ditzel L."/>
            <person name="Loewe J."/>
            <person name="Stock D."/>
            <person name="Bochtler M."/>
            <person name="Bartunik H.D."/>
            <person name="Huber R."/>
        </authorList>
    </citation>
    <scope>X-RAY CRYSTALLOGRAPHY (1.9 ANGSTROMS) OF COMPLEX WITH THE 20S PROTEASOME</scope>
</reference>
<reference key="11">
    <citation type="journal article" date="2000" name="Nature">
        <title>Structural basis for the activation of 20S proteasomes by 11S regulators.</title>
        <authorList>
            <person name="Whitby F.G."/>
            <person name="Masters E.I."/>
            <person name="Kramer L."/>
            <person name="Knowlton J.R."/>
            <person name="Yao Y."/>
            <person name="Wang C.C."/>
            <person name="Hill C.P."/>
        </authorList>
    </citation>
    <scope>X-RAY CRYSTALLOGRAPHY (3.2 ANGSTROMS) OF COMPLEX WITH THE 20S PROTEASOME AND A 11S REGULATORY COMPLEX</scope>
</reference>
<reference key="12">
    <citation type="journal article" date="2000" name="Nat. Struct. Biol.">
        <title>A gated channel into the proteasome core particle.</title>
        <authorList>
            <person name="Groll M."/>
            <person name="Bajorek M."/>
            <person name="Koehler A."/>
            <person name="Moroder L."/>
            <person name="Rubin D.M."/>
            <person name="Huber R."/>
            <person name="Glickman M.H."/>
            <person name="Finley D."/>
        </authorList>
    </citation>
    <scope>X-RAY CRYSTALLOGRAPHY (2.4 ANGSTROMS) OF COMPLEX WITH THE 20S PROTEASOME</scope>
</reference>
<reference key="13">
    <citation type="journal article" date="2006" name="Chem. Biol.">
        <title>TMC-95-based inhibitor design provides evidence for the catalytic versatility of the proteasome.</title>
        <authorList>
            <person name="Groll M."/>
            <person name="Goetz M."/>
            <person name="Kaiser M."/>
            <person name="Weyher E."/>
            <person name="Moroder L."/>
        </authorList>
    </citation>
    <scope>X-RAY CRYSTALLOGRAPHY (2.81 ANGSTROMS) OF COMPLEX WITH THE 20S PROTEASOME AND A TMC-95-BASED INHIBITOR</scope>
</reference>
<reference key="14">
    <citation type="journal article" date="2006" name="J. Am. Chem. Soc.">
        <title>Crystal structures of salinosporamide A (NPI-0052) and B (NPI-0047) in complex with the 20S proteasome reveal important consequences of beta-lactone ring opening and a mechanism for irreversible binding.</title>
        <authorList>
            <person name="Groll M."/>
            <person name="Huber R."/>
            <person name="Potts B.C.M."/>
        </authorList>
    </citation>
    <scope>X-RAY CRYSTALLOGRAPHY (2.8 ANGSTROMS) OF COMPLEX WITH THE 20S PROTEASOME AND SALINOSPORAMIDE</scope>
</reference>
<reference key="15">
    <citation type="journal article" date="2006" name="Structure">
        <title>Crystal structure of the boronic acid-based proteasome inhibitor bortezomib in complex with the yeast 20S proteasome.</title>
        <authorList>
            <person name="Groll M."/>
            <person name="Berkers C.R."/>
            <person name="Ploegh H.L."/>
            <person name="Ovaa H."/>
        </authorList>
    </citation>
    <scope>X-RAY CRYSTALLOGRAPHY (2.8 ANGSTROMS) OF COMPLEX WITH THE 20S PROTEASOME AND BORTEZOMIB</scope>
</reference>
<reference key="16">
    <citation type="journal article" date="2010" name="Mol. Cell">
        <title>Structure of a Blm10 complex reveals common mechanisms for proteasome binding and gate opening.</title>
        <authorList>
            <person name="Sadre-Bazzaz K."/>
            <person name="Whitby F.G."/>
            <person name="Robinson H."/>
            <person name="Formosa T."/>
            <person name="Hill C.P."/>
        </authorList>
    </citation>
    <scope>X-RAY CRYSTALLOGRAPHY (3.0 ANGSTROMS) IN COMPLEX WITH THE PROTEASOME</scope>
</reference>
<reference key="17">
    <citation type="journal article" date="2012" name="Proc. Natl. Acad. Sci. U.S.A.">
        <title>Near-atomic resolution structural model of the yeast 26S proteasome.</title>
        <authorList>
            <person name="Beck F."/>
            <person name="Unverdorben P."/>
            <person name="Bohn S."/>
            <person name="Schweitzer A."/>
            <person name="Pfeifer G."/>
            <person name="Sakata E."/>
            <person name="Nickell S."/>
            <person name="Plitzko J.M."/>
            <person name="Villa E."/>
            <person name="Baumeister W."/>
            <person name="Forster F."/>
        </authorList>
    </citation>
    <scope>STRUCTURE BY ELECTRON MICROSCOPY (7.4 ANGSTROMS) OF THE 26S PROTEASOME</scope>
</reference>
<protein>
    <recommendedName>
        <fullName>Proteasome subunit alpha type-6</fullName>
    </recommendedName>
    <alternativeName>
        <fullName>Macropain subunit PRE5</fullName>
    </alternativeName>
    <alternativeName>
        <fullName>Multicatalytic endopeptidase complex subunit PRE5</fullName>
    </alternativeName>
    <alternativeName>
        <fullName>Proteasome component PRE5</fullName>
    </alternativeName>
    <alternativeName>
        <fullName>Proteinase YSCE subunit PRE5</fullName>
    </alternativeName>
</protein>
<dbReference type="EMBL" id="L34347">
    <property type="protein sequence ID" value="AAA53544.1"/>
    <property type="molecule type" value="Genomic_DNA"/>
</dbReference>
<dbReference type="EMBL" id="Z54141">
    <property type="protein sequence ID" value="CAA90832.1"/>
    <property type="molecule type" value="Genomic_DNA"/>
</dbReference>
<dbReference type="EMBL" id="AY557978">
    <property type="protein sequence ID" value="AAS56304.1"/>
    <property type="molecule type" value="Genomic_DNA"/>
</dbReference>
<dbReference type="EMBL" id="BK006946">
    <property type="protein sequence ID" value="DAA10215.1"/>
    <property type="molecule type" value="Genomic_DNA"/>
</dbReference>
<dbReference type="PIR" id="A55904">
    <property type="entry name" value="A55904"/>
</dbReference>
<dbReference type="RefSeq" id="NP_014045.1">
    <property type="nucleotide sequence ID" value="NM_001182825.1"/>
</dbReference>
<dbReference type="PDB" id="1FNT">
    <property type="method" value="X-ray"/>
    <property type="resolution" value="3.20 A"/>
    <property type="chains" value="F/T=1-234"/>
</dbReference>
<dbReference type="PDB" id="1G0U">
    <property type="method" value="X-ray"/>
    <property type="resolution" value="2.40 A"/>
    <property type="chains" value="E/S=1-234"/>
</dbReference>
<dbReference type="PDB" id="1G65">
    <property type="method" value="X-ray"/>
    <property type="resolution" value="2.25 A"/>
    <property type="chains" value="E/S=2-234"/>
</dbReference>
<dbReference type="PDB" id="1JD2">
    <property type="method" value="X-ray"/>
    <property type="resolution" value="3.00 A"/>
    <property type="chains" value="E/Z=2-234"/>
</dbReference>
<dbReference type="PDB" id="1RYP">
    <property type="method" value="X-ray"/>
    <property type="resolution" value="1.90 A"/>
    <property type="chains" value="F/T=2-234"/>
</dbReference>
<dbReference type="PDB" id="1Z7Q">
    <property type="method" value="X-ray"/>
    <property type="resolution" value="3.22 A"/>
    <property type="chains" value="F/T=1-234"/>
</dbReference>
<dbReference type="PDB" id="2F16">
    <property type="method" value="X-ray"/>
    <property type="resolution" value="2.80 A"/>
    <property type="chains" value="E/S=2-234"/>
</dbReference>
<dbReference type="PDB" id="2FAK">
    <property type="method" value="X-ray"/>
    <property type="resolution" value="2.80 A"/>
    <property type="chains" value="E/S=2-234"/>
</dbReference>
<dbReference type="PDB" id="2GPL">
    <property type="method" value="X-ray"/>
    <property type="resolution" value="2.81 A"/>
    <property type="chains" value="E/S=2-234"/>
</dbReference>
<dbReference type="PDB" id="2ZCY">
    <property type="method" value="X-ray"/>
    <property type="resolution" value="2.90 A"/>
    <property type="chains" value="E/S=1-234"/>
</dbReference>
<dbReference type="PDB" id="3BDM">
    <property type="method" value="X-ray"/>
    <property type="resolution" value="2.70 A"/>
    <property type="chains" value="E/S=1-234"/>
</dbReference>
<dbReference type="PDB" id="3D29">
    <property type="method" value="X-ray"/>
    <property type="resolution" value="2.60 A"/>
    <property type="chains" value="E/S=2-234"/>
</dbReference>
<dbReference type="PDB" id="3DY3">
    <property type="method" value="X-ray"/>
    <property type="resolution" value="2.81 A"/>
    <property type="chains" value="E/S=2-234"/>
</dbReference>
<dbReference type="PDB" id="3DY4">
    <property type="method" value="X-ray"/>
    <property type="resolution" value="2.80 A"/>
    <property type="chains" value="E/S=2-234"/>
</dbReference>
<dbReference type="PDB" id="3E47">
    <property type="method" value="X-ray"/>
    <property type="resolution" value="3.00 A"/>
    <property type="chains" value="E/S=2-234"/>
</dbReference>
<dbReference type="PDB" id="3GPJ">
    <property type="method" value="X-ray"/>
    <property type="resolution" value="2.70 A"/>
    <property type="chains" value="E/S=2-234"/>
</dbReference>
<dbReference type="PDB" id="3GPT">
    <property type="method" value="X-ray"/>
    <property type="resolution" value="2.41 A"/>
    <property type="chains" value="E/S=2-234"/>
</dbReference>
<dbReference type="PDB" id="3GPW">
    <property type="method" value="X-ray"/>
    <property type="resolution" value="2.50 A"/>
    <property type="chains" value="E/S=2-234"/>
</dbReference>
<dbReference type="PDB" id="3HYE">
    <property type="method" value="X-ray"/>
    <property type="resolution" value="2.50 A"/>
    <property type="chains" value="E/S=2-234"/>
</dbReference>
<dbReference type="PDB" id="3JCO">
    <property type="method" value="EM"/>
    <property type="resolution" value="4.80 A"/>
    <property type="chains" value="F/f=1-234"/>
</dbReference>
<dbReference type="PDB" id="3JCP">
    <property type="method" value="EM"/>
    <property type="resolution" value="4.60 A"/>
    <property type="chains" value="F/f=1-234"/>
</dbReference>
<dbReference type="PDB" id="3MG0">
    <property type="method" value="X-ray"/>
    <property type="resolution" value="2.68 A"/>
    <property type="chains" value="E/S=2-234"/>
</dbReference>
<dbReference type="PDB" id="3MG4">
    <property type="method" value="X-ray"/>
    <property type="resolution" value="3.11 A"/>
    <property type="chains" value="E/S=2-234"/>
</dbReference>
<dbReference type="PDB" id="3MG6">
    <property type="method" value="X-ray"/>
    <property type="resolution" value="2.60 A"/>
    <property type="chains" value="E/S=1-234"/>
</dbReference>
<dbReference type="PDB" id="3MG7">
    <property type="method" value="X-ray"/>
    <property type="resolution" value="2.78 A"/>
    <property type="chains" value="E/S=1-234"/>
</dbReference>
<dbReference type="PDB" id="3MG8">
    <property type="method" value="X-ray"/>
    <property type="resolution" value="2.59 A"/>
    <property type="chains" value="E/S=1-234"/>
</dbReference>
<dbReference type="PDB" id="3NZJ">
    <property type="method" value="X-ray"/>
    <property type="resolution" value="2.40 A"/>
    <property type="chains" value="E/S=1-234"/>
</dbReference>
<dbReference type="PDB" id="3NZW">
    <property type="method" value="X-ray"/>
    <property type="resolution" value="2.50 A"/>
    <property type="chains" value="E/S=1-234"/>
</dbReference>
<dbReference type="PDB" id="3NZX">
    <property type="method" value="X-ray"/>
    <property type="resolution" value="2.70 A"/>
    <property type="chains" value="E/S=1-234"/>
</dbReference>
<dbReference type="PDB" id="3OEU">
    <property type="method" value="X-ray"/>
    <property type="resolution" value="2.60 A"/>
    <property type="chains" value="E/S=2-234"/>
</dbReference>
<dbReference type="PDB" id="3OEV">
    <property type="method" value="X-ray"/>
    <property type="resolution" value="2.85 A"/>
    <property type="chains" value="E/S=2-234"/>
</dbReference>
<dbReference type="PDB" id="3OKJ">
    <property type="method" value="X-ray"/>
    <property type="resolution" value="2.70 A"/>
    <property type="chains" value="E/S=2-234"/>
</dbReference>
<dbReference type="PDB" id="3SDI">
    <property type="method" value="X-ray"/>
    <property type="resolution" value="2.65 A"/>
    <property type="chains" value="E/S=2-234"/>
</dbReference>
<dbReference type="PDB" id="3SDK">
    <property type="method" value="X-ray"/>
    <property type="resolution" value="2.70 A"/>
    <property type="chains" value="E/S=2-234"/>
</dbReference>
<dbReference type="PDB" id="3SHJ">
    <property type="method" value="X-ray"/>
    <property type="resolution" value="2.80 A"/>
    <property type="chains" value="E/S=2-234"/>
</dbReference>
<dbReference type="PDB" id="3TDD">
    <property type="method" value="X-ray"/>
    <property type="resolution" value="2.70 A"/>
    <property type="chains" value="E/S=2-234"/>
</dbReference>
<dbReference type="PDB" id="3UN4">
    <property type="method" value="X-ray"/>
    <property type="resolution" value="3.40 A"/>
    <property type="chains" value="E/S=1-234"/>
</dbReference>
<dbReference type="PDB" id="3UN8">
    <property type="method" value="X-ray"/>
    <property type="resolution" value="2.70 A"/>
    <property type="chains" value="E/S=1-234"/>
</dbReference>
<dbReference type="PDB" id="3WXR">
    <property type="method" value="X-ray"/>
    <property type="resolution" value="3.15 A"/>
    <property type="chains" value="F/T=1-234"/>
</dbReference>
<dbReference type="PDB" id="4CR2">
    <property type="method" value="EM"/>
    <property type="resolution" value="7.70 A"/>
    <property type="chains" value="F=1-234"/>
</dbReference>
<dbReference type="PDB" id="4CR3">
    <property type="method" value="EM"/>
    <property type="resolution" value="9.30 A"/>
    <property type="chains" value="F=1-234"/>
</dbReference>
<dbReference type="PDB" id="4CR4">
    <property type="method" value="EM"/>
    <property type="resolution" value="8.80 A"/>
    <property type="chains" value="F=1-234"/>
</dbReference>
<dbReference type="PDB" id="4EU2">
    <property type="method" value="X-ray"/>
    <property type="resolution" value="2.51 A"/>
    <property type="chains" value="F/T=2-234"/>
</dbReference>
<dbReference type="PDB" id="4FZC">
    <property type="method" value="X-ray"/>
    <property type="resolution" value="2.80 A"/>
    <property type="chains" value="E/S=2-234"/>
</dbReference>
<dbReference type="PDB" id="4FZG">
    <property type="method" value="X-ray"/>
    <property type="resolution" value="3.00 A"/>
    <property type="chains" value="E/S=2-234"/>
</dbReference>
<dbReference type="PDB" id="4G4S">
    <property type="method" value="X-ray"/>
    <property type="resolution" value="2.49 A"/>
    <property type="chains" value="F=1-234"/>
</dbReference>
<dbReference type="PDB" id="4GK7">
    <property type="method" value="X-ray"/>
    <property type="resolution" value="2.80 A"/>
    <property type="chains" value="E/S=2-234"/>
</dbReference>
<dbReference type="PDB" id="4HNP">
    <property type="method" value="X-ray"/>
    <property type="resolution" value="2.80 A"/>
    <property type="chains" value="E/S=2-234"/>
</dbReference>
<dbReference type="PDB" id="4HRC">
    <property type="method" value="X-ray"/>
    <property type="resolution" value="2.80 A"/>
    <property type="chains" value="E/S=2-234"/>
</dbReference>
<dbReference type="PDB" id="4HRD">
    <property type="method" value="X-ray"/>
    <property type="resolution" value="2.80 A"/>
    <property type="chains" value="E/S=2-234"/>
</dbReference>
<dbReference type="PDB" id="4INR">
    <property type="method" value="X-ray"/>
    <property type="resolution" value="2.70 A"/>
    <property type="chains" value="E/S=1-234"/>
</dbReference>
<dbReference type="PDB" id="4INT">
    <property type="method" value="X-ray"/>
    <property type="resolution" value="2.90 A"/>
    <property type="chains" value="E/S=1-234"/>
</dbReference>
<dbReference type="PDB" id="4INU">
    <property type="method" value="X-ray"/>
    <property type="resolution" value="3.10 A"/>
    <property type="chains" value="E/S=1-234"/>
</dbReference>
<dbReference type="PDB" id="4J70">
    <property type="method" value="X-ray"/>
    <property type="resolution" value="2.80 A"/>
    <property type="chains" value="E/S=1-234"/>
</dbReference>
<dbReference type="PDB" id="4JSQ">
    <property type="method" value="X-ray"/>
    <property type="resolution" value="2.80 A"/>
    <property type="chains" value="E/S=1-234"/>
</dbReference>
<dbReference type="PDB" id="4JSU">
    <property type="method" value="X-ray"/>
    <property type="resolution" value="2.90 A"/>
    <property type="chains" value="E/S=1-234"/>
</dbReference>
<dbReference type="PDB" id="4JT0">
    <property type="method" value="X-ray"/>
    <property type="resolution" value="3.10 A"/>
    <property type="chains" value="E/S=1-234"/>
</dbReference>
<dbReference type="PDB" id="4LQI">
    <property type="method" value="X-ray"/>
    <property type="resolution" value="2.70 A"/>
    <property type="chains" value="E/S=2-234"/>
</dbReference>
<dbReference type="PDB" id="4LTC">
    <property type="method" value="X-ray"/>
    <property type="resolution" value="2.50 A"/>
    <property type="chains" value="E/S=1-234"/>
</dbReference>
<dbReference type="PDB" id="4NNN">
    <property type="method" value="X-ray"/>
    <property type="resolution" value="2.50 A"/>
    <property type="chains" value="E/S=1-234"/>
</dbReference>
<dbReference type="PDB" id="4NNW">
    <property type="method" value="X-ray"/>
    <property type="resolution" value="2.60 A"/>
    <property type="chains" value="E/S=1-234"/>
</dbReference>
<dbReference type="PDB" id="4NO1">
    <property type="method" value="X-ray"/>
    <property type="resolution" value="2.50 A"/>
    <property type="chains" value="E/S=1-234"/>
</dbReference>
<dbReference type="PDB" id="4NO6">
    <property type="method" value="X-ray"/>
    <property type="resolution" value="3.00 A"/>
    <property type="chains" value="E/S=1-234"/>
</dbReference>
<dbReference type="PDB" id="4NO8">
    <property type="method" value="X-ray"/>
    <property type="resolution" value="2.70 A"/>
    <property type="chains" value="E/S=1-234"/>
</dbReference>
<dbReference type="PDB" id="4NO9">
    <property type="method" value="X-ray"/>
    <property type="resolution" value="2.90 A"/>
    <property type="chains" value="E/S=1-234"/>
</dbReference>
<dbReference type="PDB" id="4Q1S">
    <property type="method" value="X-ray"/>
    <property type="resolution" value="2.60 A"/>
    <property type="chains" value="E/S=1-234"/>
</dbReference>
<dbReference type="PDB" id="4QBY">
    <property type="method" value="X-ray"/>
    <property type="resolution" value="3.00 A"/>
    <property type="chains" value="E/S=1-234"/>
</dbReference>
<dbReference type="PDB" id="4QLQ">
    <property type="method" value="X-ray"/>
    <property type="resolution" value="2.40 A"/>
    <property type="chains" value="E/S=1-234"/>
</dbReference>
<dbReference type="PDB" id="4QLS">
    <property type="method" value="X-ray"/>
    <property type="resolution" value="2.80 A"/>
    <property type="chains" value="E/S=1-234"/>
</dbReference>
<dbReference type="PDB" id="4QLT">
    <property type="method" value="X-ray"/>
    <property type="resolution" value="2.80 A"/>
    <property type="chains" value="E/S=1-234"/>
</dbReference>
<dbReference type="PDB" id="4QLU">
    <property type="method" value="X-ray"/>
    <property type="resolution" value="2.80 A"/>
    <property type="chains" value="E/S=1-234"/>
</dbReference>
<dbReference type="PDB" id="4QLV">
    <property type="method" value="X-ray"/>
    <property type="resolution" value="2.90 A"/>
    <property type="chains" value="E/S=1-234"/>
</dbReference>
<dbReference type="PDB" id="4QUX">
    <property type="method" value="X-ray"/>
    <property type="resolution" value="3.00 A"/>
    <property type="chains" value="E/S=1-234"/>
</dbReference>
<dbReference type="PDB" id="4QUY">
    <property type="method" value="X-ray"/>
    <property type="resolution" value="2.80 A"/>
    <property type="chains" value="E/S=1-234"/>
</dbReference>
<dbReference type="PDB" id="4QV0">
    <property type="method" value="X-ray"/>
    <property type="resolution" value="3.10 A"/>
    <property type="chains" value="E/S=1-234"/>
</dbReference>
<dbReference type="PDB" id="4QV1">
    <property type="method" value="X-ray"/>
    <property type="resolution" value="2.50 A"/>
    <property type="chains" value="E/S=1-234"/>
</dbReference>
<dbReference type="PDB" id="4QV3">
    <property type="method" value="X-ray"/>
    <property type="resolution" value="3.00 A"/>
    <property type="chains" value="E/S=1-234"/>
</dbReference>
<dbReference type="PDB" id="4QV4">
    <property type="method" value="X-ray"/>
    <property type="resolution" value="2.70 A"/>
    <property type="chains" value="E/S=1-234"/>
</dbReference>
<dbReference type="PDB" id="4QV5">
    <property type="method" value="X-ray"/>
    <property type="resolution" value="2.70 A"/>
    <property type="chains" value="E/S=1-234"/>
</dbReference>
<dbReference type="PDB" id="4QV6">
    <property type="method" value="X-ray"/>
    <property type="resolution" value="2.80 A"/>
    <property type="chains" value="E/S=1-234"/>
</dbReference>
<dbReference type="PDB" id="4QV7">
    <property type="method" value="X-ray"/>
    <property type="resolution" value="2.60 A"/>
    <property type="chains" value="E/S=1-234"/>
</dbReference>
<dbReference type="PDB" id="4QV8">
    <property type="method" value="X-ray"/>
    <property type="resolution" value="2.90 A"/>
    <property type="chains" value="E/S=1-234"/>
</dbReference>
<dbReference type="PDB" id="4QV9">
    <property type="method" value="X-ray"/>
    <property type="resolution" value="2.60 A"/>
    <property type="chains" value="E/S=1-234"/>
</dbReference>
<dbReference type="PDB" id="4QVL">
    <property type="method" value="X-ray"/>
    <property type="resolution" value="2.80 A"/>
    <property type="chains" value="E/S=1-234"/>
</dbReference>
<dbReference type="PDB" id="4QVM">
    <property type="method" value="X-ray"/>
    <property type="resolution" value="2.80 A"/>
    <property type="chains" value="E/S=1-234"/>
</dbReference>
<dbReference type="PDB" id="4QVN">
    <property type="method" value="X-ray"/>
    <property type="resolution" value="2.90 A"/>
    <property type="chains" value="E/S=1-234"/>
</dbReference>
<dbReference type="PDB" id="4QVP">
    <property type="method" value="X-ray"/>
    <property type="resolution" value="2.30 A"/>
    <property type="chains" value="E/S=1-234"/>
</dbReference>
<dbReference type="PDB" id="4QVQ">
    <property type="method" value="X-ray"/>
    <property type="resolution" value="2.60 A"/>
    <property type="chains" value="E/S=1-234"/>
</dbReference>
<dbReference type="PDB" id="4QVV">
    <property type="method" value="X-ray"/>
    <property type="resolution" value="2.80 A"/>
    <property type="chains" value="E/S=1-234"/>
</dbReference>
<dbReference type="PDB" id="4QVW">
    <property type="method" value="X-ray"/>
    <property type="resolution" value="3.00 A"/>
    <property type="chains" value="E/S=1-234"/>
</dbReference>
<dbReference type="PDB" id="4QVY">
    <property type="method" value="X-ray"/>
    <property type="resolution" value="2.51 A"/>
    <property type="chains" value="E/S=1-234"/>
</dbReference>
<dbReference type="PDB" id="4QW0">
    <property type="method" value="X-ray"/>
    <property type="resolution" value="2.90 A"/>
    <property type="chains" value="E/S=1-234"/>
</dbReference>
<dbReference type="PDB" id="4QW1">
    <property type="method" value="X-ray"/>
    <property type="resolution" value="2.90 A"/>
    <property type="chains" value="E/S=1-234"/>
</dbReference>
<dbReference type="PDB" id="4QW3">
    <property type="method" value="X-ray"/>
    <property type="resolution" value="2.90 A"/>
    <property type="chains" value="E/S=1-234"/>
</dbReference>
<dbReference type="PDB" id="4QW4">
    <property type="method" value="X-ray"/>
    <property type="resolution" value="2.80 A"/>
    <property type="chains" value="E/S=1-234"/>
</dbReference>
<dbReference type="PDB" id="4QW5">
    <property type="method" value="X-ray"/>
    <property type="resolution" value="3.00 A"/>
    <property type="chains" value="E/S=1-234"/>
</dbReference>
<dbReference type="PDB" id="4QW6">
    <property type="method" value="X-ray"/>
    <property type="resolution" value="2.90 A"/>
    <property type="chains" value="E/S=1-234"/>
</dbReference>
<dbReference type="PDB" id="4QW7">
    <property type="method" value="X-ray"/>
    <property type="resolution" value="2.70 A"/>
    <property type="chains" value="E/S=1-234"/>
</dbReference>
<dbReference type="PDB" id="4QWF">
    <property type="method" value="X-ray"/>
    <property type="resolution" value="3.00 A"/>
    <property type="chains" value="E/S=1-234"/>
</dbReference>
<dbReference type="PDB" id="4QWG">
    <property type="method" value="X-ray"/>
    <property type="resolution" value="2.60 A"/>
    <property type="chains" value="E/S=1-234"/>
</dbReference>
<dbReference type="PDB" id="4QWI">
    <property type="method" value="X-ray"/>
    <property type="resolution" value="2.60 A"/>
    <property type="chains" value="E/S=1-234"/>
</dbReference>
<dbReference type="PDB" id="4QWJ">
    <property type="method" value="X-ray"/>
    <property type="resolution" value="2.90 A"/>
    <property type="chains" value="E/S=1-234"/>
</dbReference>
<dbReference type="PDB" id="4QWK">
    <property type="method" value="X-ray"/>
    <property type="resolution" value="2.80 A"/>
    <property type="chains" value="E/S=1-234"/>
</dbReference>
<dbReference type="PDB" id="4QWL">
    <property type="method" value="X-ray"/>
    <property type="resolution" value="2.60 A"/>
    <property type="chains" value="E/S=1-234"/>
</dbReference>
<dbReference type="PDB" id="4QWR">
    <property type="method" value="X-ray"/>
    <property type="resolution" value="2.90 A"/>
    <property type="chains" value="E/S=1-234"/>
</dbReference>
<dbReference type="PDB" id="4QWS">
    <property type="method" value="X-ray"/>
    <property type="resolution" value="3.00 A"/>
    <property type="chains" value="E/S=1-234"/>
</dbReference>
<dbReference type="PDB" id="4QWU">
    <property type="method" value="X-ray"/>
    <property type="resolution" value="3.00 A"/>
    <property type="chains" value="E/S=1-234"/>
</dbReference>
<dbReference type="PDB" id="4QWX">
    <property type="method" value="X-ray"/>
    <property type="resolution" value="2.90 A"/>
    <property type="chains" value="E/S=1-234"/>
</dbReference>
<dbReference type="PDB" id="4QXJ">
    <property type="method" value="X-ray"/>
    <property type="resolution" value="2.80 A"/>
    <property type="chains" value="E/S=1-234"/>
</dbReference>
<dbReference type="PDB" id="4QZ0">
    <property type="method" value="X-ray"/>
    <property type="resolution" value="3.00 A"/>
    <property type="chains" value="E/S=1-234"/>
</dbReference>
<dbReference type="PDB" id="4QZ1">
    <property type="method" value="X-ray"/>
    <property type="resolution" value="3.00 A"/>
    <property type="chains" value="E/S=1-234"/>
</dbReference>
<dbReference type="PDB" id="4QZ2">
    <property type="method" value="X-ray"/>
    <property type="resolution" value="2.70 A"/>
    <property type="chains" value="E/S=1-234"/>
</dbReference>
<dbReference type="PDB" id="4QZ3">
    <property type="method" value="X-ray"/>
    <property type="resolution" value="2.80 A"/>
    <property type="chains" value="E/S=1-234"/>
</dbReference>
<dbReference type="PDB" id="4QZ4">
    <property type="method" value="X-ray"/>
    <property type="resolution" value="3.00 A"/>
    <property type="chains" value="E/S=1-234"/>
</dbReference>
<dbReference type="PDB" id="4QZ5">
    <property type="method" value="X-ray"/>
    <property type="resolution" value="2.80 A"/>
    <property type="chains" value="E/S=1-234"/>
</dbReference>
<dbReference type="PDB" id="4QZ6">
    <property type="method" value="X-ray"/>
    <property type="resolution" value="2.90 A"/>
    <property type="chains" value="E/S=1-234"/>
</dbReference>
<dbReference type="PDB" id="4QZ7">
    <property type="method" value="X-ray"/>
    <property type="resolution" value="2.80 A"/>
    <property type="chains" value="E/S=1-234"/>
</dbReference>
<dbReference type="PDB" id="4QZW">
    <property type="method" value="X-ray"/>
    <property type="resolution" value="3.00 A"/>
    <property type="chains" value="E/S=1-234"/>
</dbReference>
<dbReference type="PDB" id="4QZX">
    <property type="method" value="X-ray"/>
    <property type="resolution" value="2.60 A"/>
    <property type="chains" value="E/S=1-234"/>
</dbReference>
<dbReference type="PDB" id="4QZZ">
    <property type="method" value="X-ray"/>
    <property type="resolution" value="2.90 A"/>
    <property type="chains" value="E/S=1-234"/>
</dbReference>
<dbReference type="PDB" id="4R00">
    <property type="method" value="X-ray"/>
    <property type="resolution" value="2.80 A"/>
    <property type="chains" value="E/S=1-234"/>
</dbReference>
<dbReference type="PDB" id="4R02">
    <property type="method" value="X-ray"/>
    <property type="resolution" value="2.50 A"/>
    <property type="chains" value="E/S=1-234"/>
</dbReference>
<dbReference type="PDB" id="4R17">
    <property type="method" value="X-ray"/>
    <property type="resolution" value="2.10 A"/>
    <property type="chains" value="E/S=1-234"/>
</dbReference>
<dbReference type="PDB" id="4R18">
    <property type="method" value="X-ray"/>
    <property type="resolution" value="2.40 A"/>
    <property type="chains" value="E/S=1-234"/>
</dbReference>
<dbReference type="PDB" id="4RUR">
    <property type="method" value="X-ray"/>
    <property type="resolution" value="2.50 A"/>
    <property type="chains" value="E/S=1-234"/>
</dbReference>
<dbReference type="PDB" id="4V7O">
    <property type="method" value="X-ray"/>
    <property type="resolution" value="3.00 A"/>
    <property type="chains" value="AK/AW/BF/BT=1-234"/>
</dbReference>
<dbReference type="PDB" id="4X6Z">
    <property type="method" value="X-ray"/>
    <property type="resolution" value="2.70 A"/>
    <property type="chains" value="F/T=1-234"/>
</dbReference>
<dbReference type="PDB" id="4Y69">
    <property type="method" value="X-ray"/>
    <property type="resolution" value="2.90 A"/>
    <property type="chains" value="E/S=1-234"/>
</dbReference>
<dbReference type="PDB" id="4Y6A">
    <property type="method" value="X-ray"/>
    <property type="resolution" value="2.60 A"/>
    <property type="chains" value="E/S=1-234"/>
</dbReference>
<dbReference type="PDB" id="4Y6V">
    <property type="method" value="X-ray"/>
    <property type="resolution" value="2.80 A"/>
    <property type="chains" value="E/S=1-234"/>
</dbReference>
<dbReference type="PDB" id="4Y6Z">
    <property type="method" value="X-ray"/>
    <property type="resolution" value="2.70 A"/>
    <property type="chains" value="E/S=1-234"/>
</dbReference>
<dbReference type="PDB" id="4Y70">
    <property type="method" value="X-ray"/>
    <property type="resolution" value="2.40 A"/>
    <property type="chains" value="E/S=1-234"/>
</dbReference>
<dbReference type="PDB" id="4Y74">
    <property type="method" value="X-ray"/>
    <property type="resolution" value="2.70 A"/>
    <property type="chains" value="E/S=1-234"/>
</dbReference>
<dbReference type="PDB" id="4Y75">
    <property type="method" value="X-ray"/>
    <property type="resolution" value="2.80 A"/>
    <property type="chains" value="E/S=1-234"/>
</dbReference>
<dbReference type="PDB" id="4Y77">
    <property type="method" value="X-ray"/>
    <property type="resolution" value="2.50 A"/>
    <property type="chains" value="E/S=1-234"/>
</dbReference>
<dbReference type="PDB" id="4Y78">
    <property type="method" value="X-ray"/>
    <property type="resolution" value="2.80 A"/>
    <property type="chains" value="E/S=1-234"/>
</dbReference>
<dbReference type="PDB" id="4Y7W">
    <property type="method" value="X-ray"/>
    <property type="resolution" value="2.50 A"/>
    <property type="chains" value="E/S=1-234"/>
</dbReference>
<dbReference type="PDB" id="4Y7X">
    <property type="method" value="X-ray"/>
    <property type="resolution" value="2.60 A"/>
    <property type="chains" value="E/S=1-234"/>
</dbReference>
<dbReference type="PDB" id="4Y7Y">
    <property type="method" value="X-ray"/>
    <property type="resolution" value="2.40 A"/>
    <property type="chains" value="E/S=1-234"/>
</dbReference>
<dbReference type="PDB" id="4Y80">
    <property type="method" value="X-ray"/>
    <property type="resolution" value="2.50 A"/>
    <property type="chains" value="E/S=1-234"/>
</dbReference>
<dbReference type="PDB" id="4Y81">
    <property type="method" value="X-ray"/>
    <property type="resolution" value="2.80 A"/>
    <property type="chains" value="E/S=1-234"/>
</dbReference>
<dbReference type="PDB" id="4Y82">
    <property type="method" value="X-ray"/>
    <property type="resolution" value="2.80 A"/>
    <property type="chains" value="E/S=1-234"/>
</dbReference>
<dbReference type="PDB" id="4Y84">
    <property type="method" value="X-ray"/>
    <property type="resolution" value="2.70 A"/>
    <property type="chains" value="E/S=1-234"/>
</dbReference>
<dbReference type="PDB" id="4Y8G">
    <property type="method" value="X-ray"/>
    <property type="resolution" value="2.60 A"/>
    <property type="chains" value="E/S=1-234"/>
</dbReference>
<dbReference type="PDB" id="4Y8H">
    <property type="method" value="X-ray"/>
    <property type="resolution" value="2.50 A"/>
    <property type="chains" value="E/S=1-234"/>
</dbReference>
<dbReference type="PDB" id="4Y8I">
    <property type="method" value="X-ray"/>
    <property type="resolution" value="2.60 A"/>
    <property type="chains" value="E/S=1-234"/>
</dbReference>
<dbReference type="PDB" id="4Y8J">
    <property type="method" value="X-ray"/>
    <property type="resolution" value="2.70 A"/>
    <property type="chains" value="E/S=1-234"/>
</dbReference>
<dbReference type="PDB" id="4Y8K">
    <property type="method" value="X-ray"/>
    <property type="resolution" value="2.60 A"/>
    <property type="chains" value="E/S=1-234"/>
</dbReference>
<dbReference type="PDB" id="4Y8L">
    <property type="method" value="X-ray"/>
    <property type="resolution" value="2.40 A"/>
    <property type="chains" value="E/S=1-234"/>
</dbReference>
<dbReference type="PDB" id="4Y8M">
    <property type="method" value="X-ray"/>
    <property type="resolution" value="2.80 A"/>
    <property type="chains" value="E/S=1-234"/>
</dbReference>
<dbReference type="PDB" id="4Y8N">
    <property type="method" value="X-ray"/>
    <property type="resolution" value="2.60 A"/>
    <property type="chains" value="E/S=1-234"/>
</dbReference>
<dbReference type="PDB" id="4Y8O">
    <property type="method" value="X-ray"/>
    <property type="resolution" value="2.70 A"/>
    <property type="chains" value="E/S=1-234"/>
</dbReference>
<dbReference type="PDB" id="4Y8P">
    <property type="method" value="X-ray"/>
    <property type="resolution" value="2.80 A"/>
    <property type="chains" value="E/S=1-234"/>
</dbReference>
<dbReference type="PDB" id="4Y8Q">
    <property type="method" value="X-ray"/>
    <property type="resolution" value="2.60 A"/>
    <property type="chains" value="E/S=1-234"/>
</dbReference>
<dbReference type="PDB" id="4Y8R">
    <property type="method" value="X-ray"/>
    <property type="resolution" value="2.70 A"/>
    <property type="chains" value="E/S=1-234"/>
</dbReference>
<dbReference type="PDB" id="4Y8S">
    <property type="method" value="X-ray"/>
    <property type="resolution" value="2.70 A"/>
    <property type="chains" value="E/S=1-234"/>
</dbReference>
<dbReference type="PDB" id="4Y8T">
    <property type="method" value="X-ray"/>
    <property type="resolution" value="2.70 A"/>
    <property type="chains" value="E/S=1-234"/>
</dbReference>
<dbReference type="PDB" id="4Y8U">
    <property type="method" value="X-ray"/>
    <property type="resolution" value="2.90 A"/>
    <property type="chains" value="E/S=1-234"/>
</dbReference>
<dbReference type="PDB" id="4Y9Y">
    <property type="method" value="X-ray"/>
    <property type="resolution" value="2.80 A"/>
    <property type="chains" value="E/S=1-234"/>
</dbReference>
<dbReference type="PDB" id="4Y9Z">
    <property type="method" value="X-ray"/>
    <property type="resolution" value="2.80 A"/>
    <property type="chains" value="E/S=1-234"/>
</dbReference>
<dbReference type="PDB" id="4YA0">
    <property type="method" value="X-ray"/>
    <property type="resolution" value="2.80 A"/>
    <property type="chains" value="E/S=1-234"/>
</dbReference>
<dbReference type="PDB" id="4YA1">
    <property type="method" value="X-ray"/>
    <property type="resolution" value="2.90 A"/>
    <property type="chains" value="E/S=1-234"/>
</dbReference>
<dbReference type="PDB" id="4YA2">
    <property type="method" value="X-ray"/>
    <property type="resolution" value="2.70 A"/>
    <property type="chains" value="E/S=1-234"/>
</dbReference>
<dbReference type="PDB" id="4YA3">
    <property type="method" value="X-ray"/>
    <property type="resolution" value="2.70 A"/>
    <property type="chains" value="E/S=1-234"/>
</dbReference>
<dbReference type="PDB" id="4YA4">
    <property type="method" value="X-ray"/>
    <property type="resolution" value="2.90 A"/>
    <property type="chains" value="E/S=1-234"/>
</dbReference>
<dbReference type="PDB" id="4YA5">
    <property type="method" value="X-ray"/>
    <property type="resolution" value="2.50 A"/>
    <property type="chains" value="E/S=1-234"/>
</dbReference>
<dbReference type="PDB" id="4YA7">
    <property type="method" value="X-ray"/>
    <property type="resolution" value="2.70 A"/>
    <property type="chains" value="E/S=1-234"/>
</dbReference>
<dbReference type="PDB" id="4YA9">
    <property type="method" value="X-ray"/>
    <property type="resolution" value="2.70 A"/>
    <property type="chains" value="E/S=1-234"/>
</dbReference>
<dbReference type="PDB" id="4Z1L">
    <property type="method" value="X-ray"/>
    <property type="resolution" value="3.00 A"/>
    <property type="chains" value="E/S=1-234"/>
</dbReference>
<dbReference type="PDB" id="5A5B">
    <property type="method" value="EM"/>
    <property type="resolution" value="9.50 A"/>
    <property type="chains" value="F=1-234"/>
</dbReference>
<dbReference type="PDB" id="5AHJ">
    <property type="method" value="X-ray"/>
    <property type="resolution" value="2.80 A"/>
    <property type="chains" value="E/S=1-234"/>
</dbReference>
<dbReference type="PDB" id="5BOU">
    <property type="method" value="X-ray"/>
    <property type="resolution" value="2.60 A"/>
    <property type="chains" value="E/S=1-234"/>
</dbReference>
<dbReference type="PDB" id="5BXL">
    <property type="method" value="X-ray"/>
    <property type="resolution" value="2.80 A"/>
    <property type="chains" value="E/S=1-234"/>
</dbReference>
<dbReference type="PDB" id="5BXN">
    <property type="method" value="X-ray"/>
    <property type="resolution" value="2.80 A"/>
    <property type="chains" value="E/S=1-234"/>
</dbReference>
<dbReference type="PDB" id="5CGF">
    <property type="method" value="X-ray"/>
    <property type="resolution" value="2.80 A"/>
    <property type="chains" value="E/S=1-234"/>
</dbReference>
<dbReference type="PDB" id="5CGG">
    <property type="method" value="X-ray"/>
    <property type="resolution" value="2.90 A"/>
    <property type="chains" value="E/S=1-234"/>
</dbReference>
<dbReference type="PDB" id="5CGH">
    <property type="method" value="X-ray"/>
    <property type="resolution" value="2.50 A"/>
    <property type="chains" value="E/S=1-234"/>
</dbReference>
<dbReference type="PDB" id="5CGI">
    <property type="method" value="X-ray"/>
    <property type="resolution" value="2.80 A"/>
    <property type="chains" value="E/S=1-234"/>
</dbReference>
<dbReference type="PDB" id="5CZ4">
    <property type="method" value="X-ray"/>
    <property type="resolution" value="2.30 A"/>
    <property type="chains" value="E/S=1-234"/>
</dbReference>
<dbReference type="PDB" id="5CZ5">
    <property type="method" value="X-ray"/>
    <property type="resolution" value="2.80 A"/>
    <property type="chains" value="E/S=1-234"/>
</dbReference>
<dbReference type="PDB" id="5CZ6">
    <property type="method" value="X-ray"/>
    <property type="resolution" value="2.70 A"/>
    <property type="chains" value="E/S=1-234"/>
</dbReference>
<dbReference type="PDB" id="5CZ7">
    <property type="method" value="X-ray"/>
    <property type="resolution" value="2.50 A"/>
    <property type="chains" value="E/S=1-234"/>
</dbReference>
<dbReference type="PDB" id="5CZ8">
    <property type="method" value="X-ray"/>
    <property type="resolution" value="2.80 A"/>
    <property type="chains" value="E/S=1-234"/>
</dbReference>
<dbReference type="PDB" id="5CZ9">
    <property type="method" value="X-ray"/>
    <property type="resolution" value="2.90 A"/>
    <property type="chains" value="E/S=1-234"/>
</dbReference>
<dbReference type="PDB" id="5CZA">
    <property type="method" value="X-ray"/>
    <property type="resolution" value="2.50 A"/>
    <property type="chains" value="E/S=1-234"/>
</dbReference>
<dbReference type="PDB" id="5D0S">
    <property type="method" value="X-ray"/>
    <property type="resolution" value="2.50 A"/>
    <property type="chains" value="E/S=1-234"/>
</dbReference>
<dbReference type="PDB" id="5D0T">
    <property type="method" value="X-ray"/>
    <property type="resolution" value="2.60 A"/>
    <property type="chains" value="E/S=1-234"/>
</dbReference>
<dbReference type="PDB" id="5D0V">
    <property type="method" value="X-ray"/>
    <property type="resolution" value="2.90 A"/>
    <property type="chains" value="E/S=1-234"/>
</dbReference>
<dbReference type="PDB" id="5D0W">
    <property type="method" value="X-ray"/>
    <property type="resolution" value="2.80 A"/>
    <property type="chains" value="E/S=1-234"/>
</dbReference>
<dbReference type="PDB" id="5D0X">
    <property type="method" value="X-ray"/>
    <property type="resolution" value="2.60 A"/>
    <property type="chains" value="E/S=1-234"/>
</dbReference>
<dbReference type="PDB" id="5D0Z">
    <property type="method" value="X-ray"/>
    <property type="resolution" value="2.90 A"/>
    <property type="chains" value="E/S=1-234"/>
</dbReference>
<dbReference type="PDB" id="5DKI">
    <property type="method" value="X-ray"/>
    <property type="resolution" value="2.80 A"/>
    <property type="chains" value="E/S=1-234"/>
</dbReference>
<dbReference type="PDB" id="5DKJ">
    <property type="method" value="X-ray"/>
    <property type="resolution" value="2.80 A"/>
    <property type="chains" value="E/S=1-234"/>
</dbReference>
<dbReference type="PDB" id="5FG7">
    <property type="method" value="X-ray"/>
    <property type="resolution" value="2.70 A"/>
    <property type="chains" value="E/S=1-234"/>
</dbReference>
<dbReference type="PDB" id="5FG9">
    <property type="method" value="X-ray"/>
    <property type="resolution" value="2.60 A"/>
    <property type="chains" value="E/S=1-234"/>
</dbReference>
<dbReference type="PDB" id="5FGA">
    <property type="method" value="X-ray"/>
    <property type="resolution" value="2.70 A"/>
    <property type="chains" value="E/S=1-234"/>
</dbReference>
<dbReference type="PDB" id="5FGD">
    <property type="method" value="X-ray"/>
    <property type="resolution" value="2.80 A"/>
    <property type="chains" value="E/S=1-234"/>
</dbReference>
<dbReference type="PDB" id="5FGE">
    <property type="method" value="X-ray"/>
    <property type="resolution" value="2.60 A"/>
    <property type="chains" value="E/S=1-234"/>
</dbReference>
<dbReference type="PDB" id="5FGF">
    <property type="method" value="X-ray"/>
    <property type="resolution" value="2.60 A"/>
    <property type="chains" value="E/S=1-234"/>
</dbReference>
<dbReference type="PDB" id="5FGG">
    <property type="method" value="X-ray"/>
    <property type="resolution" value="2.70 A"/>
    <property type="chains" value="E/S=1-234"/>
</dbReference>
<dbReference type="PDB" id="5FGH">
    <property type="method" value="X-ray"/>
    <property type="resolution" value="2.80 A"/>
    <property type="chains" value="E/S=1-234"/>
</dbReference>
<dbReference type="PDB" id="5FGI">
    <property type="method" value="X-ray"/>
    <property type="resolution" value="2.90 A"/>
    <property type="chains" value="E/S=1-234"/>
</dbReference>
<dbReference type="PDB" id="5FHS">
    <property type="method" value="X-ray"/>
    <property type="resolution" value="2.70 A"/>
    <property type="chains" value="E/S=1-234"/>
</dbReference>
<dbReference type="PDB" id="5JHR">
    <property type="method" value="X-ray"/>
    <property type="resolution" value="2.90 A"/>
    <property type="chains" value="E/S=1-234"/>
</dbReference>
<dbReference type="PDB" id="5JHS">
    <property type="method" value="X-ray"/>
    <property type="resolution" value="3.00 A"/>
    <property type="chains" value="E/S=1-234"/>
</dbReference>
<dbReference type="PDB" id="5L52">
    <property type="method" value="X-ray"/>
    <property type="resolution" value="2.70 A"/>
    <property type="chains" value="E/S=1-234"/>
</dbReference>
<dbReference type="PDB" id="5L54">
    <property type="method" value="X-ray"/>
    <property type="resolution" value="2.80 A"/>
    <property type="chains" value="E/S=1-234"/>
</dbReference>
<dbReference type="PDB" id="5L55">
    <property type="method" value="X-ray"/>
    <property type="resolution" value="2.90 A"/>
    <property type="chains" value="E/S=1-234"/>
</dbReference>
<dbReference type="PDB" id="5L5A">
    <property type="method" value="X-ray"/>
    <property type="resolution" value="2.40 A"/>
    <property type="chains" value="E/S=1-234"/>
</dbReference>
<dbReference type="PDB" id="5L5B">
    <property type="method" value="X-ray"/>
    <property type="resolution" value="2.80 A"/>
    <property type="chains" value="E/S=1-234"/>
</dbReference>
<dbReference type="PDB" id="5L5D">
    <property type="method" value="X-ray"/>
    <property type="resolution" value="2.80 A"/>
    <property type="chains" value="E/S=1-234"/>
</dbReference>
<dbReference type="PDB" id="5L5E">
    <property type="method" value="X-ray"/>
    <property type="resolution" value="2.90 A"/>
    <property type="chains" value="E/S=1-234"/>
</dbReference>
<dbReference type="PDB" id="5L5F">
    <property type="method" value="X-ray"/>
    <property type="resolution" value="2.50 A"/>
    <property type="chains" value="E/S=1-234"/>
</dbReference>
<dbReference type="PDB" id="5L5H">
    <property type="method" value="X-ray"/>
    <property type="resolution" value="2.60 A"/>
    <property type="chains" value="E/S=1-234"/>
</dbReference>
<dbReference type="PDB" id="5L5I">
    <property type="method" value="X-ray"/>
    <property type="resolution" value="2.90 A"/>
    <property type="chains" value="E/S=1-234"/>
</dbReference>
<dbReference type="PDB" id="5L5J">
    <property type="method" value="X-ray"/>
    <property type="resolution" value="2.90 A"/>
    <property type="chains" value="E/S=1-234"/>
</dbReference>
<dbReference type="PDB" id="5L5O">
    <property type="method" value="X-ray"/>
    <property type="resolution" value="2.60 A"/>
    <property type="chains" value="E/S=1-234"/>
</dbReference>
<dbReference type="PDB" id="5L5P">
    <property type="method" value="X-ray"/>
    <property type="resolution" value="2.80 A"/>
    <property type="chains" value="E/S=1-234"/>
</dbReference>
<dbReference type="PDB" id="5L5Q">
    <property type="method" value="X-ray"/>
    <property type="resolution" value="2.80 A"/>
    <property type="chains" value="E/S=1-234"/>
</dbReference>
<dbReference type="PDB" id="5L5R">
    <property type="method" value="X-ray"/>
    <property type="resolution" value="2.90 A"/>
    <property type="chains" value="E/S=1-234"/>
</dbReference>
<dbReference type="PDB" id="5L5S">
    <property type="method" value="X-ray"/>
    <property type="resolution" value="2.60 A"/>
    <property type="chains" value="E/S=1-234"/>
</dbReference>
<dbReference type="PDB" id="5L5T">
    <property type="method" value="X-ray"/>
    <property type="resolution" value="2.90 A"/>
    <property type="chains" value="E/S=1-234"/>
</dbReference>
<dbReference type="PDB" id="5L5U">
    <property type="method" value="X-ray"/>
    <property type="resolution" value="2.60 A"/>
    <property type="chains" value="E/S=1-234"/>
</dbReference>
<dbReference type="PDB" id="5L5V">
    <property type="method" value="X-ray"/>
    <property type="resolution" value="2.70 A"/>
    <property type="chains" value="E/S=1-234"/>
</dbReference>
<dbReference type="PDB" id="5L5W">
    <property type="method" value="X-ray"/>
    <property type="resolution" value="2.80 A"/>
    <property type="chains" value="E/S=1-234"/>
</dbReference>
<dbReference type="PDB" id="5L5X">
    <property type="method" value="X-ray"/>
    <property type="resolution" value="2.90 A"/>
    <property type="chains" value="E/S=1-234"/>
</dbReference>
<dbReference type="PDB" id="5L5Y">
    <property type="method" value="X-ray"/>
    <property type="resolution" value="2.70 A"/>
    <property type="chains" value="E/S=1-234"/>
</dbReference>
<dbReference type="PDB" id="5L5Z">
    <property type="method" value="X-ray"/>
    <property type="resolution" value="2.70 A"/>
    <property type="chains" value="E/S=1-234"/>
</dbReference>
<dbReference type="PDB" id="5L60">
    <property type="method" value="X-ray"/>
    <property type="resolution" value="2.70 A"/>
    <property type="chains" value="E/S=1-234"/>
</dbReference>
<dbReference type="PDB" id="5L61">
    <property type="method" value="X-ray"/>
    <property type="resolution" value="2.80 A"/>
    <property type="chains" value="E/S=1-234"/>
</dbReference>
<dbReference type="PDB" id="5L62">
    <property type="method" value="X-ray"/>
    <property type="resolution" value="2.80 A"/>
    <property type="chains" value="E/S=1-234"/>
</dbReference>
<dbReference type="PDB" id="5L63">
    <property type="method" value="X-ray"/>
    <property type="resolution" value="2.70 A"/>
    <property type="chains" value="E/S=1-234"/>
</dbReference>
<dbReference type="PDB" id="5L64">
    <property type="method" value="X-ray"/>
    <property type="resolution" value="2.70 A"/>
    <property type="chains" value="E/S=1-234"/>
</dbReference>
<dbReference type="PDB" id="5L65">
    <property type="method" value="X-ray"/>
    <property type="resolution" value="2.90 A"/>
    <property type="chains" value="E/S=1-234"/>
</dbReference>
<dbReference type="PDB" id="5L66">
    <property type="method" value="X-ray"/>
    <property type="resolution" value="2.80 A"/>
    <property type="chains" value="E/S=1-234"/>
</dbReference>
<dbReference type="PDB" id="5L67">
    <property type="method" value="X-ray"/>
    <property type="resolution" value="2.60 A"/>
    <property type="chains" value="E/S=1-234"/>
</dbReference>
<dbReference type="PDB" id="5L68">
    <property type="method" value="X-ray"/>
    <property type="resolution" value="2.80 A"/>
    <property type="chains" value="E/S=1-234"/>
</dbReference>
<dbReference type="PDB" id="5L69">
    <property type="method" value="X-ray"/>
    <property type="resolution" value="2.70 A"/>
    <property type="chains" value="E/S=1-234"/>
</dbReference>
<dbReference type="PDB" id="5L6A">
    <property type="method" value="X-ray"/>
    <property type="resolution" value="2.80 A"/>
    <property type="chains" value="E/S=1-234"/>
</dbReference>
<dbReference type="PDB" id="5L6B">
    <property type="method" value="X-ray"/>
    <property type="resolution" value="2.60 A"/>
    <property type="chains" value="E/S=1-234"/>
</dbReference>
<dbReference type="PDB" id="5L6C">
    <property type="method" value="X-ray"/>
    <property type="resolution" value="2.60 A"/>
    <property type="chains" value="E/S=1-234"/>
</dbReference>
<dbReference type="PDB" id="5LAI">
    <property type="method" value="X-ray"/>
    <property type="resolution" value="2.50 A"/>
    <property type="chains" value="E/S=1-234"/>
</dbReference>
<dbReference type="PDB" id="5LAJ">
    <property type="method" value="X-ray"/>
    <property type="resolution" value="2.90 A"/>
    <property type="chains" value="E/S=1-234"/>
</dbReference>
<dbReference type="PDB" id="5LTT">
    <property type="method" value="X-ray"/>
    <property type="resolution" value="2.70 A"/>
    <property type="chains" value="E/S=1-234"/>
</dbReference>
<dbReference type="PDB" id="5M2B">
    <property type="method" value="X-ray"/>
    <property type="resolution" value="2.70 A"/>
    <property type="chains" value="E/S=1-234"/>
</dbReference>
<dbReference type="PDB" id="5MP9">
    <property type="method" value="EM"/>
    <property type="resolution" value="4.10 A"/>
    <property type="chains" value="F/f=1-234"/>
</dbReference>
<dbReference type="PDB" id="5MPA">
    <property type="method" value="EM"/>
    <property type="resolution" value="4.50 A"/>
    <property type="chains" value="F/f=1-234"/>
</dbReference>
<dbReference type="PDB" id="5MPB">
    <property type="method" value="EM"/>
    <property type="resolution" value="7.80 A"/>
    <property type="chains" value="F/f=1-234"/>
</dbReference>
<dbReference type="PDB" id="5MPC">
    <property type="method" value="EM"/>
    <property type="resolution" value="7.70 A"/>
    <property type="chains" value="F/f=1-234"/>
</dbReference>
<dbReference type="PDB" id="5NIF">
    <property type="method" value="X-ray"/>
    <property type="resolution" value="3.00 A"/>
    <property type="chains" value="F/T=1-234"/>
</dbReference>
<dbReference type="PDB" id="5WVI">
    <property type="method" value="EM"/>
    <property type="resolution" value="6.30 A"/>
    <property type="chains" value="F/l=1-234"/>
</dbReference>
<dbReference type="PDB" id="5WVK">
    <property type="method" value="EM"/>
    <property type="resolution" value="4.20 A"/>
    <property type="chains" value="F/l=1-234"/>
</dbReference>
<dbReference type="PDB" id="6EF0">
    <property type="method" value="EM"/>
    <property type="resolution" value="4.43 A"/>
    <property type="chains" value="F=1-234"/>
</dbReference>
<dbReference type="PDB" id="6EF1">
    <property type="method" value="EM"/>
    <property type="resolution" value="4.73 A"/>
    <property type="chains" value="F=2-234"/>
</dbReference>
<dbReference type="PDB" id="6EF2">
    <property type="method" value="EM"/>
    <property type="resolution" value="4.27 A"/>
    <property type="chains" value="F=3-234"/>
</dbReference>
<dbReference type="PDB" id="6EF3">
    <property type="method" value="EM"/>
    <property type="resolution" value="4.17 A"/>
    <property type="chains" value="F=1-234"/>
</dbReference>
<dbReference type="PDB" id="6FVT">
    <property type="method" value="EM"/>
    <property type="resolution" value="4.10 A"/>
    <property type="chains" value="F/f=4-234"/>
</dbReference>
<dbReference type="PDB" id="6FVU">
    <property type="method" value="EM"/>
    <property type="resolution" value="4.50 A"/>
    <property type="chains" value="F/f=4-234"/>
</dbReference>
<dbReference type="PDB" id="6FVV">
    <property type="method" value="EM"/>
    <property type="resolution" value="5.40 A"/>
    <property type="chains" value="F/f=4-234"/>
</dbReference>
<dbReference type="PDB" id="6FVW">
    <property type="method" value="EM"/>
    <property type="resolution" value="4.50 A"/>
    <property type="chains" value="F/f=3-234"/>
</dbReference>
<dbReference type="PDB" id="6FVX">
    <property type="method" value="EM"/>
    <property type="resolution" value="4.90 A"/>
    <property type="chains" value="F/f=3-234"/>
</dbReference>
<dbReference type="PDB" id="6FVY">
    <property type="method" value="EM"/>
    <property type="resolution" value="6.10 A"/>
    <property type="chains" value="F/f=3-234"/>
</dbReference>
<dbReference type="PDB" id="6G7F">
    <property type="method" value="X-ray"/>
    <property type="resolution" value="2.70 A"/>
    <property type="chains" value="E/S=1-234"/>
</dbReference>
<dbReference type="PDB" id="6G8M">
    <property type="method" value="X-ray"/>
    <property type="resolution" value="2.70 A"/>
    <property type="chains" value="E/S=1-234"/>
</dbReference>
<dbReference type="PDB" id="6G8N">
    <property type="method" value="X-ray"/>
    <property type="resolution" value="3.00 A"/>
    <property type="chains" value="E/S=1-234"/>
</dbReference>
<dbReference type="PDB" id="6GOP">
    <property type="method" value="X-ray"/>
    <property type="resolution" value="2.90 A"/>
    <property type="chains" value="E/S=1-234"/>
</dbReference>
<dbReference type="PDB" id="6H39">
    <property type="method" value="X-ray"/>
    <property type="resolution" value="2.50 A"/>
    <property type="chains" value="E/S=1-234"/>
</dbReference>
<dbReference type="PDB" id="6HTB">
    <property type="method" value="X-ray"/>
    <property type="resolution" value="2.70 A"/>
    <property type="chains" value="E/S=1-234"/>
</dbReference>
<dbReference type="PDB" id="6HTC">
    <property type="method" value="X-ray"/>
    <property type="resolution" value="2.80 A"/>
    <property type="chains" value="E/S=1-234"/>
</dbReference>
<dbReference type="PDB" id="6HTD">
    <property type="method" value="X-ray"/>
    <property type="resolution" value="3.00 A"/>
    <property type="chains" value="E/S=1-234"/>
</dbReference>
<dbReference type="PDB" id="6HTP">
    <property type="method" value="X-ray"/>
    <property type="resolution" value="3.00 A"/>
    <property type="chains" value="E/S=1-234"/>
</dbReference>
<dbReference type="PDB" id="6HTR">
    <property type="method" value="X-ray"/>
    <property type="resolution" value="2.60 A"/>
    <property type="chains" value="E/S=1-234"/>
</dbReference>
<dbReference type="PDB" id="6HUB">
    <property type="method" value="X-ray"/>
    <property type="resolution" value="2.90 A"/>
    <property type="chains" value="E/S=1-234"/>
</dbReference>
<dbReference type="PDB" id="6HUC">
    <property type="method" value="X-ray"/>
    <property type="resolution" value="3.00 A"/>
    <property type="chains" value="E/S=1-234"/>
</dbReference>
<dbReference type="PDB" id="6HUQ">
    <property type="method" value="X-ray"/>
    <property type="resolution" value="3.00 A"/>
    <property type="chains" value="E/S=1-234"/>
</dbReference>
<dbReference type="PDB" id="6HUU">
    <property type="method" value="X-ray"/>
    <property type="resolution" value="2.80 A"/>
    <property type="chains" value="E/S=1-234"/>
</dbReference>
<dbReference type="PDB" id="6HUV">
    <property type="method" value="X-ray"/>
    <property type="resolution" value="3.10 A"/>
    <property type="chains" value="E/S=1-234"/>
</dbReference>
<dbReference type="PDB" id="6HV3">
    <property type="method" value="X-ray"/>
    <property type="resolution" value="2.70 A"/>
    <property type="chains" value="E/S=1-234"/>
</dbReference>
<dbReference type="PDB" id="6HV4">
    <property type="method" value="X-ray"/>
    <property type="resolution" value="3.00 A"/>
    <property type="chains" value="E/S=1-234"/>
</dbReference>
<dbReference type="PDB" id="6HV5">
    <property type="method" value="X-ray"/>
    <property type="resolution" value="3.00 A"/>
    <property type="chains" value="E/S=1-234"/>
</dbReference>
<dbReference type="PDB" id="6HV7">
    <property type="method" value="X-ray"/>
    <property type="resolution" value="3.40 A"/>
    <property type="chains" value="E/S=1-234"/>
</dbReference>
<dbReference type="PDB" id="6HVA">
    <property type="method" value="X-ray"/>
    <property type="resolution" value="2.90 A"/>
    <property type="chains" value="E/S=1-234"/>
</dbReference>
<dbReference type="PDB" id="6HVR">
    <property type="method" value="X-ray"/>
    <property type="resolution" value="2.70 A"/>
    <property type="chains" value="E/S=1-234"/>
</dbReference>
<dbReference type="PDB" id="6HVS">
    <property type="method" value="X-ray"/>
    <property type="resolution" value="3.10 A"/>
    <property type="chains" value="E/S=1-234"/>
</dbReference>
<dbReference type="PDB" id="6HVT">
    <property type="method" value="X-ray"/>
    <property type="resolution" value="2.90 A"/>
    <property type="chains" value="E/S=1-234"/>
</dbReference>
<dbReference type="PDB" id="6HVU">
    <property type="method" value="X-ray"/>
    <property type="resolution" value="2.90 A"/>
    <property type="chains" value="E/S=1-234"/>
</dbReference>
<dbReference type="PDB" id="6HVV">
    <property type="method" value="X-ray"/>
    <property type="resolution" value="2.70 A"/>
    <property type="chains" value="E/S=1-234"/>
</dbReference>
<dbReference type="PDB" id="6HVW">
    <property type="method" value="X-ray"/>
    <property type="resolution" value="3.00 A"/>
    <property type="chains" value="E/S=1-234"/>
</dbReference>
<dbReference type="PDB" id="6HVX">
    <property type="method" value="X-ray"/>
    <property type="resolution" value="2.80 A"/>
    <property type="chains" value="E/S=1-234"/>
</dbReference>
<dbReference type="PDB" id="6HVY">
    <property type="method" value="X-ray"/>
    <property type="resolution" value="2.70 A"/>
    <property type="chains" value="E/S=1-234"/>
</dbReference>
<dbReference type="PDB" id="6HW0">
    <property type="method" value="X-ray"/>
    <property type="resolution" value="2.80 A"/>
    <property type="chains" value="E/S=1-234"/>
</dbReference>
<dbReference type="PDB" id="6HW3">
    <property type="method" value="X-ray"/>
    <property type="resolution" value="2.60 A"/>
    <property type="chains" value="E/S=1-234"/>
</dbReference>
<dbReference type="PDB" id="6HW4">
    <property type="method" value="X-ray"/>
    <property type="resolution" value="2.90 A"/>
    <property type="chains" value="E/S=1-234"/>
</dbReference>
<dbReference type="PDB" id="6HW5">
    <property type="method" value="X-ray"/>
    <property type="resolution" value="2.90 A"/>
    <property type="chains" value="E/S=1-234"/>
</dbReference>
<dbReference type="PDB" id="6HW6">
    <property type="method" value="X-ray"/>
    <property type="resolution" value="2.70 A"/>
    <property type="chains" value="E/S=1-234"/>
</dbReference>
<dbReference type="PDB" id="6HW7">
    <property type="method" value="X-ray"/>
    <property type="resolution" value="2.70 A"/>
    <property type="chains" value="E/S=1-234"/>
</dbReference>
<dbReference type="PDB" id="6HW8">
    <property type="method" value="X-ray"/>
    <property type="resolution" value="2.80 A"/>
    <property type="chains" value="E/S=1-234"/>
</dbReference>
<dbReference type="PDB" id="6HW9">
    <property type="method" value="X-ray"/>
    <property type="resolution" value="2.80 A"/>
    <property type="chains" value="E/S=1-234"/>
</dbReference>
<dbReference type="PDB" id="6HWA">
    <property type="method" value="X-ray"/>
    <property type="resolution" value="2.80 A"/>
    <property type="chains" value="E/S=1-234"/>
</dbReference>
<dbReference type="PDB" id="6HWB">
    <property type="method" value="X-ray"/>
    <property type="resolution" value="2.60 A"/>
    <property type="chains" value="E/S=1-234"/>
</dbReference>
<dbReference type="PDB" id="6HWC">
    <property type="method" value="X-ray"/>
    <property type="resolution" value="2.80 A"/>
    <property type="chains" value="E/S=1-234"/>
</dbReference>
<dbReference type="PDB" id="6HWD">
    <property type="method" value="X-ray"/>
    <property type="resolution" value="2.80 A"/>
    <property type="chains" value="E/S=1-234"/>
</dbReference>
<dbReference type="PDB" id="6HWE">
    <property type="method" value="X-ray"/>
    <property type="resolution" value="2.30 A"/>
    <property type="chains" value="E/S=1-234"/>
</dbReference>
<dbReference type="PDB" id="6HWF">
    <property type="method" value="X-ray"/>
    <property type="resolution" value="2.50 A"/>
    <property type="chains" value="E/S=1-234"/>
</dbReference>
<dbReference type="PDB" id="6J2C">
    <property type="method" value="EM"/>
    <property type="resolution" value="7.00 A"/>
    <property type="chains" value="F/l=1-234"/>
</dbReference>
<dbReference type="PDB" id="6J2N">
    <property type="method" value="EM"/>
    <property type="resolution" value="7.50 A"/>
    <property type="chains" value="F/l=1-234"/>
</dbReference>
<dbReference type="PDB" id="6J2Q">
    <property type="method" value="EM"/>
    <property type="resolution" value="3.80 A"/>
    <property type="chains" value="F/l=1-234"/>
</dbReference>
<dbReference type="PDB" id="6J2X">
    <property type="method" value="EM"/>
    <property type="resolution" value="3.80 A"/>
    <property type="chains" value="F/l=1-234"/>
</dbReference>
<dbReference type="PDB" id="6J30">
    <property type="method" value="EM"/>
    <property type="resolution" value="4.50 A"/>
    <property type="chains" value="F/l=1-234"/>
</dbReference>
<dbReference type="PDB" id="6ZOU">
    <property type="method" value="X-ray"/>
    <property type="resolution" value="2.90 A"/>
    <property type="chains" value="E/S=1-234"/>
</dbReference>
<dbReference type="PDB" id="6ZP6">
    <property type="method" value="X-ray"/>
    <property type="resolution" value="2.80 A"/>
    <property type="chains" value="E/S=1-234"/>
</dbReference>
<dbReference type="PDB" id="6ZP8">
    <property type="method" value="X-ray"/>
    <property type="resolution" value="3.00 A"/>
    <property type="chains" value="E/S=1-234"/>
</dbReference>
<dbReference type="PDB" id="7LS5">
    <property type="method" value="EM"/>
    <property type="resolution" value="2.74 A"/>
    <property type="chains" value="F/T=1-234"/>
</dbReference>
<dbReference type="PDB" id="7LS6">
    <property type="method" value="EM"/>
    <property type="resolution" value="3.17 A"/>
    <property type="chains" value="F=1-234"/>
</dbReference>
<dbReference type="PDB" id="7LSX">
    <property type="method" value="EM"/>
    <property type="resolution" value="3.61 A"/>
    <property type="chains" value="F=1-234"/>
</dbReference>
<dbReference type="PDB" id="7O2L">
    <property type="method" value="X-ray"/>
    <property type="resolution" value="3.00 A"/>
    <property type="chains" value="E/S=1-234"/>
</dbReference>
<dbReference type="PDB" id="7QO3">
    <property type="method" value="EM"/>
    <property type="resolution" value="6.10 A"/>
    <property type="chains" value="F/f=1-234"/>
</dbReference>
<dbReference type="PDB" id="7QO5">
    <property type="method" value="EM"/>
    <property type="resolution" value="6.00 A"/>
    <property type="chains" value="F/f=1-234"/>
</dbReference>
<dbReference type="PDB" id="7TEJ">
    <property type="method" value="EM"/>
    <property type="resolution" value="2.74 A"/>
    <property type="chains" value="F/T=1-234"/>
</dbReference>
<dbReference type="PDB" id="7TEO">
    <property type="method" value="EM"/>
    <property type="resolution" value="2.97 A"/>
    <property type="chains" value="F/T=1-234"/>
</dbReference>
<dbReference type="PDB" id="8BW1">
    <property type="method" value="X-ray"/>
    <property type="resolution" value="3.25 A"/>
    <property type="chains" value="E/S=1-234"/>
</dbReference>
<dbReference type="PDB" id="8OHZ">
    <property type="method" value="X-ray"/>
    <property type="resolution" value="2.65 A"/>
    <property type="chains" value="E/S=1-234"/>
</dbReference>
<dbReference type="PDB" id="8OI1">
    <property type="method" value="X-ray"/>
    <property type="resolution" value="2.95 A"/>
    <property type="chains" value="E/S=1-234"/>
</dbReference>
<dbReference type="PDB" id="8OLR">
    <property type="method" value="X-ray"/>
    <property type="resolution" value="2.80 A"/>
    <property type="chains" value="E/S=1-234"/>
</dbReference>
<dbReference type="PDB" id="8RHJ">
    <property type="method" value="X-ray"/>
    <property type="resolution" value="3.05 A"/>
    <property type="chains" value="E/S=1-234"/>
</dbReference>
<dbReference type="PDB" id="8RHK">
    <property type="method" value="X-ray"/>
    <property type="resolution" value="2.80 A"/>
    <property type="chains" value="E/S=1-234"/>
</dbReference>
<dbReference type="PDB" id="8RHL">
    <property type="method" value="X-ray"/>
    <property type="resolution" value="3.20 A"/>
    <property type="chains" value="E/S=1-234"/>
</dbReference>
<dbReference type="PDB" id="8RVL">
    <property type="method" value="EM"/>
    <property type="resolution" value="2.14 A"/>
    <property type="chains" value="F/T=1-234"/>
</dbReference>
<dbReference type="PDB" id="8RVO">
    <property type="method" value="EM"/>
    <property type="resolution" value="2.69 A"/>
    <property type="chains" value="F/T=1-234"/>
</dbReference>
<dbReference type="PDB" id="8RVP">
    <property type="method" value="EM"/>
    <property type="resolution" value="2.28 A"/>
    <property type="chains" value="F/T=1-234"/>
</dbReference>
<dbReference type="PDB" id="8RVQ">
    <property type="method" value="EM"/>
    <property type="resolution" value="2.02 A"/>
    <property type="chains" value="F/T=1-234"/>
</dbReference>
<dbReference type="PDB" id="8T08">
    <property type="method" value="EM"/>
    <property type="resolution" value="3.00 A"/>
    <property type="chains" value="F/W=1-234"/>
</dbReference>
<dbReference type="PDB" id="8T0M">
    <property type="method" value="EM"/>
    <property type="resolution" value="2.40 A"/>
    <property type="chains" value="F/T=1-234"/>
</dbReference>
<dbReference type="PDB" id="8U6Y">
    <property type="method" value="EM"/>
    <property type="resolution" value="2.80 A"/>
    <property type="chains" value="F/W=1-234"/>
</dbReference>
<dbReference type="PDB" id="8U7U">
    <property type="method" value="EM"/>
    <property type="resolution" value="2.16 A"/>
    <property type="chains" value="F/T=1-234"/>
</dbReference>
<dbReference type="PDB" id="9D0T">
    <property type="method" value="EM"/>
    <property type="resolution" value="2.84 A"/>
    <property type="chains" value="F=1-234"/>
</dbReference>
<dbReference type="PDB" id="9EY9">
    <property type="method" value="X-ray"/>
    <property type="resolution" value="3.10 A"/>
    <property type="chains" value="E/S=1-234"/>
</dbReference>
<dbReference type="PDB" id="9FST">
    <property type="method" value="X-ray"/>
    <property type="resolution" value="2.75 A"/>
    <property type="chains" value="E/S=1-234"/>
</dbReference>
<dbReference type="PDB" id="9FSV">
    <property type="method" value="X-ray"/>
    <property type="resolution" value="2.75 A"/>
    <property type="chains" value="E/S=1-234"/>
</dbReference>
<dbReference type="PDB" id="9FT0">
    <property type="method" value="X-ray"/>
    <property type="resolution" value="2.75 A"/>
    <property type="chains" value="E/S=1-234"/>
</dbReference>
<dbReference type="PDB" id="9FT1">
    <property type="method" value="X-ray"/>
    <property type="resolution" value="2.60 A"/>
    <property type="chains" value="E/S=1-234"/>
</dbReference>
<dbReference type="PDB" id="9GBK">
    <property type="method" value="EM"/>
    <property type="resolution" value="2.39 A"/>
    <property type="chains" value="F/T=1-234"/>
</dbReference>
<dbReference type="PDBsum" id="1FNT"/>
<dbReference type="PDBsum" id="1G0U"/>
<dbReference type="PDBsum" id="1G65"/>
<dbReference type="PDBsum" id="1JD2"/>
<dbReference type="PDBsum" id="1RYP"/>
<dbReference type="PDBsum" id="1Z7Q"/>
<dbReference type="PDBsum" id="2F16"/>
<dbReference type="PDBsum" id="2FAK"/>
<dbReference type="PDBsum" id="2GPL"/>
<dbReference type="PDBsum" id="2ZCY"/>
<dbReference type="PDBsum" id="3BDM"/>
<dbReference type="PDBsum" id="3D29"/>
<dbReference type="PDBsum" id="3DY3"/>
<dbReference type="PDBsum" id="3DY4"/>
<dbReference type="PDBsum" id="3E47"/>
<dbReference type="PDBsum" id="3GPJ"/>
<dbReference type="PDBsum" id="3GPT"/>
<dbReference type="PDBsum" id="3GPW"/>
<dbReference type="PDBsum" id="3HYE"/>
<dbReference type="PDBsum" id="3JCO"/>
<dbReference type="PDBsum" id="3JCP"/>
<dbReference type="PDBsum" id="3MG0"/>
<dbReference type="PDBsum" id="3MG4"/>
<dbReference type="PDBsum" id="3MG6"/>
<dbReference type="PDBsum" id="3MG7"/>
<dbReference type="PDBsum" id="3MG8"/>
<dbReference type="PDBsum" id="3NZJ"/>
<dbReference type="PDBsum" id="3NZW"/>
<dbReference type="PDBsum" id="3NZX"/>
<dbReference type="PDBsum" id="3OEU"/>
<dbReference type="PDBsum" id="3OEV"/>
<dbReference type="PDBsum" id="3OKJ"/>
<dbReference type="PDBsum" id="3SDI"/>
<dbReference type="PDBsum" id="3SDK"/>
<dbReference type="PDBsum" id="3SHJ"/>
<dbReference type="PDBsum" id="3TDD"/>
<dbReference type="PDBsum" id="3UN4"/>
<dbReference type="PDBsum" id="3UN8"/>
<dbReference type="PDBsum" id="3WXR"/>
<dbReference type="PDBsum" id="4CR2"/>
<dbReference type="PDBsum" id="4CR3"/>
<dbReference type="PDBsum" id="4CR4"/>
<dbReference type="PDBsum" id="4EU2"/>
<dbReference type="PDBsum" id="4FZC"/>
<dbReference type="PDBsum" id="4FZG"/>
<dbReference type="PDBsum" id="4G4S"/>
<dbReference type="PDBsum" id="4GK7"/>
<dbReference type="PDBsum" id="4HNP"/>
<dbReference type="PDBsum" id="4HRC"/>
<dbReference type="PDBsum" id="4HRD"/>
<dbReference type="PDBsum" id="4INR"/>
<dbReference type="PDBsum" id="4INT"/>
<dbReference type="PDBsum" id="4INU"/>
<dbReference type="PDBsum" id="4J70"/>
<dbReference type="PDBsum" id="4JSQ"/>
<dbReference type="PDBsum" id="4JSU"/>
<dbReference type="PDBsum" id="4JT0"/>
<dbReference type="PDBsum" id="4LQI"/>
<dbReference type="PDBsum" id="4LTC"/>
<dbReference type="PDBsum" id="4NNN"/>
<dbReference type="PDBsum" id="4NNW"/>
<dbReference type="PDBsum" id="4NO1"/>
<dbReference type="PDBsum" id="4NO6"/>
<dbReference type="PDBsum" id="4NO8"/>
<dbReference type="PDBsum" id="4NO9"/>
<dbReference type="PDBsum" id="4Q1S"/>
<dbReference type="PDBsum" id="4QBY"/>
<dbReference type="PDBsum" id="4QLQ"/>
<dbReference type="PDBsum" id="4QLS"/>
<dbReference type="PDBsum" id="4QLT"/>
<dbReference type="PDBsum" id="4QLU"/>
<dbReference type="PDBsum" id="4QLV"/>
<dbReference type="PDBsum" id="4QUX"/>
<dbReference type="PDBsum" id="4QUY"/>
<dbReference type="PDBsum" id="4QV0"/>
<dbReference type="PDBsum" id="4QV1"/>
<dbReference type="PDBsum" id="4QV3"/>
<dbReference type="PDBsum" id="4QV4"/>
<dbReference type="PDBsum" id="4QV5"/>
<dbReference type="PDBsum" id="4QV6"/>
<dbReference type="PDBsum" id="4QV7"/>
<dbReference type="PDBsum" id="4QV8"/>
<dbReference type="PDBsum" id="4QV9"/>
<dbReference type="PDBsum" id="4QVL"/>
<dbReference type="PDBsum" id="4QVM"/>
<dbReference type="PDBsum" id="4QVN"/>
<dbReference type="PDBsum" id="4QVP"/>
<dbReference type="PDBsum" id="4QVQ"/>
<dbReference type="PDBsum" id="4QVV"/>
<dbReference type="PDBsum" id="4QVW"/>
<dbReference type="PDBsum" id="4QVY"/>
<dbReference type="PDBsum" id="4QW0"/>
<dbReference type="PDBsum" id="4QW1"/>
<dbReference type="PDBsum" id="4QW3"/>
<dbReference type="PDBsum" id="4QW4"/>
<dbReference type="PDBsum" id="4QW5"/>
<dbReference type="PDBsum" id="4QW6"/>
<dbReference type="PDBsum" id="4QW7"/>
<dbReference type="PDBsum" id="4QWF"/>
<dbReference type="PDBsum" id="4QWG"/>
<dbReference type="PDBsum" id="4QWI"/>
<dbReference type="PDBsum" id="4QWJ"/>
<dbReference type="PDBsum" id="4QWK"/>
<dbReference type="PDBsum" id="4QWL"/>
<dbReference type="PDBsum" id="4QWR"/>
<dbReference type="PDBsum" id="4QWS"/>
<dbReference type="PDBsum" id="4QWU"/>
<dbReference type="PDBsum" id="4QWX"/>
<dbReference type="PDBsum" id="4QXJ"/>
<dbReference type="PDBsum" id="4QZ0"/>
<dbReference type="PDBsum" id="4QZ1"/>
<dbReference type="PDBsum" id="4QZ2"/>
<dbReference type="PDBsum" id="4QZ3"/>
<dbReference type="PDBsum" id="4QZ4"/>
<dbReference type="PDBsum" id="4QZ5"/>
<dbReference type="PDBsum" id="4QZ6"/>
<dbReference type="PDBsum" id="4QZ7"/>
<dbReference type="PDBsum" id="4QZW"/>
<dbReference type="PDBsum" id="4QZX"/>
<dbReference type="PDBsum" id="4QZZ"/>
<dbReference type="PDBsum" id="4R00"/>
<dbReference type="PDBsum" id="4R02"/>
<dbReference type="PDBsum" id="4R17"/>
<dbReference type="PDBsum" id="4R18"/>
<dbReference type="PDBsum" id="4RUR"/>
<dbReference type="PDBsum" id="4V7O"/>
<dbReference type="PDBsum" id="4X6Z"/>
<dbReference type="PDBsum" id="4Y69"/>
<dbReference type="PDBsum" id="4Y6A"/>
<dbReference type="PDBsum" id="4Y6V"/>
<dbReference type="PDBsum" id="4Y6Z"/>
<dbReference type="PDBsum" id="4Y70"/>
<dbReference type="PDBsum" id="4Y74"/>
<dbReference type="PDBsum" id="4Y75"/>
<dbReference type="PDBsum" id="4Y77"/>
<dbReference type="PDBsum" id="4Y78"/>
<dbReference type="PDBsum" id="4Y7W"/>
<dbReference type="PDBsum" id="4Y7X"/>
<dbReference type="PDBsum" id="4Y7Y"/>
<dbReference type="PDBsum" id="4Y80"/>
<dbReference type="PDBsum" id="4Y81"/>
<dbReference type="PDBsum" id="4Y82"/>
<dbReference type="PDBsum" id="4Y84"/>
<dbReference type="PDBsum" id="4Y8G"/>
<dbReference type="PDBsum" id="4Y8H"/>
<dbReference type="PDBsum" id="4Y8I"/>
<dbReference type="PDBsum" id="4Y8J"/>
<dbReference type="PDBsum" id="4Y8K"/>
<dbReference type="PDBsum" id="4Y8L"/>
<dbReference type="PDBsum" id="4Y8M"/>
<dbReference type="PDBsum" id="4Y8N"/>
<dbReference type="PDBsum" id="4Y8O"/>
<dbReference type="PDBsum" id="4Y8P"/>
<dbReference type="PDBsum" id="4Y8Q"/>
<dbReference type="PDBsum" id="4Y8R"/>
<dbReference type="PDBsum" id="4Y8S"/>
<dbReference type="PDBsum" id="4Y8T"/>
<dbReference type="PDBsum" id="4Y8U"/>
<dbReference type="PDBsum" id="4Y9Y"/>
<dbReference type="PDBsum" id="4Y9Z"/>
<dbReference type="PDBsum" id="4YA0"/>
<dbReference type="PDBsum" id="4YA1"/>
<dbReference type="PDBsum" id="4YA2"/>
<dbReference type="PDBsum" id="4YA3"/>
<dbReference type="PDBsum" id="4YA4"/>
<dbReference type="PDBsum" id="4YA5"/>
<dbReference type="PDBsum" id="4YA7"/>
<dbReference type="PDBsum" id="4YA9"/>
<dbReference type="PDBsum" id="4Z1L"/>
<dbReference type="PDBsum" id="5A5B"/>
<dbReference type="PDBsum" id="5AHJ"/>
<dbReference type="PDBsum" id="5BOU"/>
<dbReference type="PDBsum" id="5BXL"/>
<dbReference type="PDBsum" id="5BXN"/>
<dbReference type="PDBsum" id="5CGF"/>
<dbReference type="PDBsum" id="5CGG"/>
<dbReference type="PDBsum" id="5CGH"/>
<dbReference type="PDBsum" id="5CGI"/>
<dbReference type="PDBsum" id="5CZ4"/>
<dbReference type="PDBsum" id="5CZ5"/>
<dbReference type="PDBsum" id="5CZ6"/>
<dbReference type="PDBsum" id="5CZ7"/>
<dbReference type="PDBsum" id="5CZ8"/>
<dbReference type="PDBsum" id="5CZ9"/>
<dbReference type="PDBsum" id="5CZA"/>
<dbReference type="PDBsum" id="5D0S"/>
<dbReference type="PDBsum" id="5D0T"/>
<dbReference type="PDBsum" id="5D0V"/>
<dbReference type="PDBsum" id="5D0W"/>
<dbReference type="PDBsum" id="5D0X"/>
<dbReference type="PDBsum" id="5D0Z"/>
<dbReference type="PDBsum" id="5DKI"/>
<dbReference type="PDBsum" id="5DKJ"/>
<dbReference type="PDBsum" id="5FG7"/>
<dbReference type="PDBsum" id="5FG9"/>
<dbReference type="PDBsum" id="5FGA"/>
<dbReference type="PDBsum" id="5FGD"/>
<dbReference type="PDBsum" id="5FGE"/>
<dbReference type="PDBsum" id="5FGF"/>
<dbReference type="PDBsum" id="5FGG"/>
<dbReference type="PDBsum" id="5FGH"/>
<dbReference type="PDBsum" id="5FGI"/>
<dbReference type="PDBsum" id="5FHS"/>
<dbReference type="PDBsum" id="5JHR"/>
<dbReference type="PDBsum" id="5JHS"/>
<dbReference type="PDBsum" id="5L52"/>
<dbReference type="PDBsum" id="5L54"/>
<dbReference type="PDBsum" id="5L55"/>
<dbReference type="PDBsum" id="5L5A"/>
<dbReference type="PDBsum" id="5L5B"/>
<dbReference type="PDBsum" id="5L5D"/>
<dbReference type="PDBsum" id="5L5E"/>
<dbReference type="PDBsum" id="5L5F"/>
<dbReference type="PDBsum" id="5L5H"/>
<dbReference type="PDBsum" id="5L5I"/>
<dbReference type="PDBsum" id="5L5J"/>
<dbReference type="PDBsum" id="5L5O"/>
<dbReference type="PDBsum" id="5L5P"/>
<dbReference type="PDBsum" id="5L5Q"/>
<dbReference type="PDBsum" id="5L5R"/>
<dbReference type="PDBsum" id="5L5S"/>
<dbReference type="PDBsum" id="5L5T"/>
<dbReference type="PDBsum" id="5L5U"/>
<dbReference type="PDBsum" id="5L5V"/>
<dbReference type="PDBsum" id="5L5W"/>
<dbReference type="PDBsum" id="5L5X"/>
<dbReference type="PDBsum" id="5L5Y"/>
<dbReference type="PDBsum" id="5L5Z"/>
<dbReference type="PDBsum" id="5L60"/>
<dbReference type="PDBsum" id="5L61"/>
<dbReference type="PDBsum" id="5L62"/>
<dbReference type="PDBsum" id="5L63"/>
<dbReference type="PDBsum" id="5L64"/>
<dbReference type="PDBsum" id="5L65"/>
<dbReference type="PDBsum" id="5L66"/>
<dbReference type="PDBsum" id="5L67"/>
<dbReference type="PDBsum" id="5L68"/>
<dbReference type="PDBsum" id="5L69"/>
<dbReference type="PDBsum" id="5L6A"/>
<dbReference type="PDBsum" id="5L6B"/>
<dbReference type="PDBsum" id="5L6C"/>
<dbReference type="PDBsum" id="5LAI"/>
<dbReference type="PDBsum" id="5LAJ"/>
<dbReference type="PDBsum" id="5LTT"/>
<dbReference type="PDBsum" id="5M2B"/>
<dbReference type="PDBsum" id="5MP9"/>
<dbReference type="PDBsum" id="5MPA"/>
<dbReference type="PDBsum" id="5MPB"/>
<dbReference type="PDBsum" id="5MPC"/>
<dbReference type="PDBsum" id="5NIF"/>
<dbReference type="PDBsum" id="5WVI"/>
<dbReference type="PDBsum" id="5WVK"/>
<dbReference type="PDBsum" id="6EF0"/>
<dbReference type="PDBsum" id="6EF1"/>
<dbReference type="PDBsum" id="6EF2"/>
<dbReference type="PDBsum" id="6EF3"/>
<dbReference type="PDBsum" id="6FVT"/>
<dbReference type="PDBsum" id="6FVU"/>
<dbReference type="PDBsum" id="6FVV"/>
<dbReference type="PDBsum" id="6FVW"/>
<dbReference type="PDBsum" id="6FVX"/>
<dbReference type="PDBsum" id="6FVY"/>
<dbReference type="PDBsum" id="6G7F"/>
<dbReference type="PDBsum" id="6G8M"/>
<dbReference type="PDBsum" id="6G8N"/>
<dbReference type="PDBsum" id="6GOP"/>
<dbReference type="PDBsum" id="6H39"/>
<dbReference type="PDBsum" id="6HTB"/>
<dbReference type="PDBsum" id="6HTC"/>
<dbReference type="PDBsum" id="6HTD"/>
<dbReference type="PDBsum" id="6HTP"/>
<dbReference type="PDBsum" id="6HTR"/>
<dbReference type="PDBsum" id="6HUB"/>
<dbReference type="PDBsum" id="6HUC"/>
<dbReference type="PDBsum" id="6HUQ"/>
<dbReference type="PDBsum" id="6HUU"/>
<dbReference type="PDBsum" id="6HUV"/>
<dbReference type="PDBsum" id="6HV3"/>
<dbReference type="PDBsum" id="6HV4"/>
<dbReference type="PDBsum" id="6HV5"/>
<dbReference type="PDBsum" id="6HV7"/>
<dbReference type="PDBsum" id="6HVA"/>
<dbReference type="PDBsum" id="6HVR"/>
<dbReference type="PDBsum" id="6HVS"/>
<dbReference type="PDBsum" id="6HVT"/>
<dbReference type="PDBsum" id="6HVU"/>
<dbReference type="PDBsum" id="6HVV"/>
<dbReference type="PDBsum" id="6HVW"/>
<dbReference type="PDBsum" id="6HVX"/>
<dbReference type="PDBsum" id="6HVY"/>
<dbReference type="PDBsum" id="6HW0"/>
<dbReference type="PDBsum" id="6HW3"/>
<dbReference type="PDBsum" id="6HW4"/>
<dbReference type="PDBsum" id="6HW5"/>
<dbReference type="PDBsum" id="6HW6"/>
<dbReference type="PDBsum" id="6HW7"/>
<dbReference type="PDBsum" id="6HW8"/>
<dbReference type="PDBsum" id="6HW9"/>
<dbReference type="PDBsum" id="6HWA"/>
<dbReference type="PDBsum" id="6HWB"/>
<dbReference type="PDBsum" id="6HWC"/>
<dbReference type="PDBsum" id="6HWD"/>
<dbReference type="PDBsum" id="6HWE"/>
<dbReference type="PDBsum" id="6HWF"/>
<dbReference type="PDBsum" id="6J2C"/>
<dbReference type="PDBsum" id="6J2N"/>
<dbReference type="PDBsum" id="6J2Q"/>
<dbReference type="PDBsum" id="6J2X"/>
<dbReference type="PDBsum" id="6J30"/>
<dbReference type="PDBsum" id="6ZOU"/>
<dbReference type="PDBsum" id="6ZP6"/>
<dbReference type="PDBsum" id="6ZP8"/>
<dbReference type="PDBsum" id="7LS5"/>
<dbReference type="PDBsum" id="7LS6"/>
<dbReference type="PDBsum" id="7LSX"/>
<dbReference type="PDBsum" id="7O2L"/>
<dbReference type="PDBsum" id="7QO3"/>
<dbReference type="PDBsum" id="7QO5"/>
<dbReference type="PDBsum" id="7TEJ"/>
<dbReference type="PDBsum" id="7TEO"/>
<dbReference type="PDBsum" id="8BW1"/>
<dbReference type="PDBsum" id="8OHZ"/>
<dbReference type="PDBsum" id="8OI1"/>
<dbReference type="PDBsum" id="8OLR"/>
<dbReference type="PDBsum" id="8RHJ"/>
<dbReference type="PDBsum" id="8RHK"/>
<dbReference type="PDBsum" id="8RHL"/>
<dbReference type="PDBsum" id="8RVL"/>
<dbReference type="PDBsum" id="8RVO"/>
<dbReference type="PDBsum" id="8RVP"/>
<dbReference type="PDBsum" id="8RVQ"/>
<dbReference type="PDBsum" id="8T08"/>
<dbReference type="PDBsum" id="8T0M"/>
<dbReference type="PDBsum" id="8U6Y"/>
<dbReference type="PDBsum" id="8U7U"/>
<dbReference type="PDBsum" id="9D0T"/>
<dbReference type="PDBsum" id="9EY9"/>
<dbReference type="PDBsum" id="9FST"/>
<dbReference type="PDBsum" id="9FSV"/>
<dbReference type="PDBsum" id="9FT0"/>
<dbReference type="PDBsum" id="9FT1"/>
<dbReference type="PDBsum" id="9GBK"/>
<dbReference type="EMDB" id="EMD-14082"/>
<dbReference type="EMDB" id="EMD-14084"/>
<dbReference type="EMDB" id="EMD-19523"/>
<dbReference type="EMDB" id="EMD-19527"/>
<dbReference type="EMDB" id="EMD-19528"/>
<dbReference type="EMDB" id="EMD-19529"/>
<dbReference type="EMDB" id="EMD-23502"/>
<dbReference type="EMDB" id="EMD-23503"/>
<dbReference type="EMDB" id="EMD-23508"/>
<dbReference type="EMDB" id="EMD-25847"/>
<dbReference type="EMDB" id="EMD-25848"/>
<dbReference type="EMDB" id="EMD-3534"/>
<dbReference type="EMDB" id="EMD-3535"/>
<dbReference type="EMDB" id="EMD-3536"/>
<dbReference type="EMDB" id="EMD-3537"/>
<dbReference type="EMDB" id="EMD-40938"/>
<dbReference type="EMDB" id="EMD-40944"/>
<dbReference type="EMDB" id="EMD-41963"/>
<dbReference type="EMDB" id="EMD-41993"/>
<dbReference type="EMDB" id="EMD-4321"/>
<dbReference type="EMDB" id="EMD-4322"/>
<dbReference type="EMDB" id="EMD-4323"/>
<dbReference type="EMDB" id="EMD-4324"/>
<dbReference type="EMDB" id="EMD-46461"/>
<dbReference type="EMDB" id="EMD-51221"/>
<dbReference type="EMDB" id="EMD-6693"/>
<dbReference type="EMDB" id="EMD-6694"/>
<dbReference type="EMDB" id="EMD-9042"/>
<dbReference type="EMDB" id="EMD-9043"/>
<dbReference type="EMDB" id="EMD-9044"/>
<dbReference type="EMDB" id="EMD-9045"/>
<dbReference type="EMDB" id="EMD-9769"/>
<dbReference type="EMDB" id="EMD-9770"/>
<dbReference type="EMDB" id="EMD-9771"/>
<dbReference type="EMDB" id="EMD-9772"/>
<dbReference type="EMDB" id="EMD-9773"/>
<dbReference type="SMR" id="P40302"/>
<dbReference type="BioGRID" id="35494">
    <property type="interactions" value="122"/>
</dbReference>
<dbReference type="ComplexPortal" id="CPX-2262">
    <property type="entry name" value="26S proteasome complex"/>
</dbReference>
<dbReference type="DIP" id="DIP-1528N"/>
<dbReference type="FunCoup" id="P40302">
    <property type="interactions" value="1379"/>
</dbReference>
<dbReference type="IntAct" id="P40302">
    <property type="interactions" value="61"/>
</dbReference>
<dbReference type="MINT" id="P40302"/>
<dbReference type="STRING" id="4932.YMR314W"/>
<dbReference type="MEROPS" id="T01.976"/>
<dbReference type="iPTMnet" id="P40302"/>
<dbReference type="PaxDb" id="4932-YMR314W"/>
<dbReference type="PeptideAtlas" id="P40302"/>
<dbReference type="EnsemblFungi" id="YMR314W_mRNA">
    <property type="protein sequence ID" value="YMR314W"/>
    <property type="gene ID" value="YMR314W"/>
</dbReference>
<dbReference type="GeneID" id="855362"/>
<dbReference type="KEGG" id="sce:YMR314W"/>
<dbReference type="AGR" id="SGD:S000004931"/>
<dbReference type="SGD" id="S000004931">
    <property type="gene designation" value="PRE5"/>
</dbReference>
<dbReference type="VEuPathDB" id="FungiDB:YMR314W"/>
<dbReference type="eggNOG" id="KOG0863">
    <property type="taxonomic scope" value="Eukaryota"/>
</dbReference>
<dbReference type="GeneTree" id="ENSGT00550000074855"/>
<dbReference type="HOGENOM" id="CLU_035750_8_0_1"/>
<dbReference type="InParanoid" id="P40302"/>
<dbReference type="OMA" id="NTQVYGK"/>
<dbReference type="OrthoDB" id="431557at2759"/>
<dbReference type="BioCyc" id="YEAST:G3O-32978-MONOMER"/>
<dbReference type="Reactome" id="R-SCE-1236978">
    <property type="pathway name" value="Cross-presentation of soluble exogenous antigens (endosomes)"/>
</dbReference>
<dbReference type="Reactome" id="R-SCE-5668541">
    <property type="pathway name" value="TNFR2 non-canonical NF-kB pathway"/>
</dbReference>
<dbReference type="Reactome" id="R-SCE-5687128">
    <property type="pathway name" value="MAPK6/MAPK4 signaling"/>
</dbReference>
<dbReference type="Reactome" id="R-SCE-5689880">
    <property type="pathway name" value="Ub-specific processing proteases"/>
</dbReference>
<dbReference type="Reactome" id="R-SCE-68949">
    <property type="pathway name" value="Orc1 removal from chromatin"/>
</dbReference>
<dbReference type="Reactome" id="R-SCE-69017">
    <property type="pathway name" value="CDK-mediated phosphorylation and removal of Cdc6"/>
</dbReference>
<dbReference type="Reactome" id="R-SCE-69601">
    <property type="pathway name" value="Ubiquitin Mediated Degradation of Phosphorylated Cdc25A"/>
</dbReference>
<dbReference type="Reactome" id="R-SCE-8854050">
    <property type="pathway name" value="FBXL7 down-regulates AURKA during mitotic entry and in early mitosis"/>
</dbReference>
<dbReference type="Reactome" id="R-SCE-8948751">
    <property type="pathway name" value="Regulation of PTEN stability and activity"/>
</dbReference>
<dbReference type="Reactome" id="R-SCE-8951664">
    <property type="pathway name" value="Neddylation"/>
</dbReference>
<dbReference type="Reactome" id="R-SCE-9755511">
    <property type="pathway name" value="KEAP1-NFE2L2 pathway"/>
</dbReference>
<dbReference type="Reactome" id="R-SCE-983168">
    <property type="pathway name" value="Antigen processing: Ubiquitination &amp; Proteasome degradation"/>
</dbReference>
<dbReference type="Reactome" id="R-SCE-9907900">
    <property type="pathway name" value="Proteasome assembly"/>
</dbReference>
<dbReference type="BioGRID-ORCS" id="855362">
    <property type="hits" value="1 hit in 10 CRISPR screens"/>
</dbReference>
<dbReference type="EvolutionaryTrace" id="P40302"/>
<dbReference type="PRO" id="PR:P40302"/>
<dbReference type="Proteomes" id="UP000002311">
    <property type="component" value="Chromosome XIII"/>
</dbReference>
<dbReference type="RNAct" id="P40302">
    <property type="molecule type" value="protein"/>
</dbReference>
<dbReference type="GO" id="GO:0005634">
    <property type="term" value="C:nucleus"/>
    <property type="evidence" value="ECO:0000318"/>
    <property type="project" value="GO_Central"/>
</dbReference>
<dbReference type="GO" id="GO:0000502">
    <property type="term" value="C:proteasome complex"/>
    <property type="evidence" value="ECO:0000353"/>
    <property type="project" value="ComplexPortal"/>
</dbReference>
<dbReference type="GO" id="GO:0019773">
    <property type="term" value="C:proteasome core complex, alpha-subunit complex"/>
    <property type="evidence" value="ECO:0000314"/>
    <property type="project" value="SGD"/>
</dbReference>
<dbReference type="GO" id="GO:0034515">
    <property type="term" value="C:proteasome storage granule"/>
    <property type="evidence" value="ECO:0000314"/>
    <property type="project" value="SGD"/>
</dbReference>
<dbReference type="GO" id="GO:0010499">
    <property type="term" value="P:proteasomal ubiquitin-independent protein catabolic process"/>
    <property type="evidence" value="ECO:0000314"/>
    <property type="project" value="SGD"/>
</dbReference>
<dbReference type="GO" id="GO:0043161">
    <property type="term" value="P:proteasome-mediated ubiquitin-dependent protein catabolic process"/>
    <property type="evidence" value="ECO:0000314"/>
    <property type="project" value="SGD"/>
</dbReference>
<dbReference type="FunFam" id="3.60.20.10:FF:000016">
    <property type="entry name" value="Proteasome subunit alpha type-6"/>
    <property type="match status" value="1"/>
</dbReference>
<dbReference type="Gene3D" id="3.60.20.10">
    <property type="entry name" value="Glutamine Phosphoribosylpyrophosphate, subunit 1, domain 1"/>
    <property type="match status" value="1"/>
</dbReference>
<dbReference type="InterPro" id="IPR029055">
    <property type="entry name" value="Ntn_hydrolases_N"/>
</dbReference>
<dbReference type="InterPro" id="IPR050115">
    <property type="entry name" value="Proteasome_alpha"/>
</dbReference>
<dbReference type="InterPro" id="IPR023332">
    <property type="entry name" value="Proteasome_alpha-type"/>
</dbReference>
<dbReference type="InterPro" id="IPR000426">
    <property type="entry name" value="Proteasome_asu_N"/>
</dbReference>
<dbReference type="InterPro" id="IPR001353">
    <property type="entry name" value="Proteasome_sua/b"/>
</dbReference>
<dbReference type="PANTHER" id="PTHR11599">
    <property type="entry name" value="PROTEASOME SUBUNIT ALPHA/BETA"/>
    <property type="match status" value="1"/>
</dbReference>
<dbReference type="Pfam" id="PF00227">
    <property type="entry name" value="Proteasome"/>
    <property type="match status" value="1"/>
</dbReference>
<dbReference type="Pfam" id="PF10584">
    <property type="entry name" value="Proteasome_A_N"/>
    <property type="match status" value="1"/>
</dbReference>
<dbReference type="SMART" id="SM00948">
    <property type="entry name" value="Proteasome_A_N"/>
    <property type="match status" value="1"/>
</dbReference>
<dbReference type="SUPFAM" id="SSF56235">
    <property type="entry name" value="N-terminal nucleophile aminohydrolases (Ntn hydrolases)"/>
    <property type="match status" value="1"/>
</dbReference>
<dbReference type="PROSITE" id="PS00388">
    <property type="entry name" value="PROTEASOME_ALPHA_1"/>
    <property type="match status" value="1"/>
</dbReference>
<dbReference type="PROSITE" id="PS51475">
    <property type="entry name" value="PROTEASOME_ALPHA_2"/>
    <property type="match status" value="1"/>
</dbReference>
<feature type="chain" id="PRO_0000124076" description="Proteasome subunit alpha type-6">
    <location>
        <begin position="1"/>
        <end position="234"/>
    </location>
</feature>
<feature type="modified residue" description="Phosphoserine" evidence="4 5">
    <location>
        <position position="14"/>
    </location>
</feature>
<feature type="cross-link" description="Glycyl lysine isopeptide (Lys-Gly) (interchain with G-Cter in ubiquitin)" evidence="6">
    <location>
        <position position="191"/>
    </location>
</feature>
<feature type="helix" evidence="7">
    <location>
        <begin position="3"/>
        <end position="6"/>
    </location>
</feature>
<feature type="strand" evidence="8">
    <location>
        <begin position="15"/>
        <end position="17"/>
    </location>
</feature>
<feature type="helix" evidence="7">
    <location>
        <begin position="20"/>
        <end position="30"/>
    </location>
</feature>
<feature type="strand" evidence="7">
    <location>
        <begin position="35"/>
        <end position="39"/>
    </location>
</feature>
<feature type="strand" evidence="7">
    <location>
        <begin position="41"/>
        <end position="49"/>
    </location>
</feature>
<feature type="strand" evidence="12">
    <location>
        <begin position="52"/>
        <end position="54"/>
    </location>
</feature>
<feature type="strand" evidence="7">
    <location>
        <begin position="63"/>
        <end position="67"/>
    </location>
</feature>
<feature type="strand" evidence="7">
    <location>
        <begin position="70"/>
        <end position="76"/>
    </location>
</feature>
<feature type="helix" evidence="7">
    <location>
        <begin position="78"/>
        <end position="99"/>
    </location>
</feature>
<feature type="helix" evidence="7">
    <location>
        <begin position="105"/>
        <end position="121"/>
    </location>
</feature>
<feature type="strand" evidence="11">
    <location>
        <begin position="122"/>
        <end position="125"/>
    </location>
</feature>
<feature type="strand" evidence="7">
    <location>
        <begin position="130"/>
        <end position="138"/>
    </location>
</feature>
<feature type="strand" evidence="7">
    <location>
        <begin position="141"/>
        <end position="147"/>
    </location>
</feature>
<feature type="turn" evidence="11">
    <location>
        <begin position="149"/>
        <end position="151"/>
    </location>
</feature>
<feature type="strand" evidence="7">
    <location>
        <begin position="153"/>
        <end position="162"/>
    </location>
</feature>
<feature type="turn" evidence="7">
    <location>
        <begin position="163"/>
        <end position="165"/>
    </location>
</feature>
<feature type="helix" evidence="7">
    <location>
        <begin position="166"/>
        <end position="179"/>
    </location>
</feature>
<feature type="helix" evidence="10">
    <location>
        <begin position="180"/>
        <end position="182"/>
    </location>
</feature>
<feature type="helix" evidence="7">
    <location>
        <begin position="186"/>
        <end position="197"/>
    </location>
</feature>
<feature type="helix" evidence="9">
    <location>
        <begin position="198"/>
        <end position="200"/>
    </location>
</feature>
<feature type="strand" evidence="13">
    <location>
        <begin position="201"/>
        <end position="203"/>
    </location>
</feature>
<feature type="turn" evidence="7">
    <location>
        <begin position="208"/>
        <end position="210"/>
    </location>
</feature>
<feature type="strand" evidence="7">
    <location>
        <begin position="211"/>
        <end position="217"/>
    </location>
</feature>
<feature type="strand" evidence="7">
    <location>
        <begin position="220"/>
        <end position="226"/>
    </location>
</feature>
<feature type="helix" evidence="7">
    <location>
        <begin position="227"/>
        <end position="233"/>
    </location>
</feature>
<name>PSA6_YEAST</name>
<evidence type="ECO:0000255" key="1">
    <source>
        <dbReference type="PROSITE-ProRule" id="PRU00808"/>
    </source>
</evidence>
<evidence type="ECO:0000269" key="2">
    <source>
    </source>
</evidence>
<evidence type="ECO:0000269" key="3">
    <source>
    </source>
</evidence>
<evidence type="ECO:0007744" key="4">
    <source>
    </source>
</evidence>
<evidence type="ECO:0007744" key="5">
    <source>
    </source>
</evidence>
<evidence type="ECO:0007744" key="6">
    <source>
    </source>
</evidence>
<evidence type="ECO:0007829" key="7">
    <source>
        <dbReference type="PDB" id="1RYP"/>
    </source>
</evidence>
<evidence type="ECO:0007829" key="8">
    <source>
        <dbReference type="PDB" id="4FZC"/>
    </source>
</evidence>
<evidence type="ECO:0007829" key="9">
    <source>
        <dbReference type="PDB" id="4QVP"/>
    </source>
</evidence>
<evidence type="ECO:0007829" key="10">
    <source>
        <dbReference type="PDB" id="7LS6"/>
    </source>
</evidence>
<evidence type="ECO:0007829" key="11">
    <source>
        <dbReference type="PDB" id="8RVL"/>
    </source>
</evidence>
<evidence type="ECO:0007829" key="12">
    <source>
        <dbReference type="PDB" id="8RVQ"/>
    </source>
</evidence>
<evidence type="ECO:0007829" key="13">
    <source>
        <dbReference type="PDB" id="9GBK"/>
    </source>
</evidence>
<keyword id="KW-0002">3D-structure</keyword>
<keyword id="KW-0963">Cytoplasm</keyword>
<keyword id="KW-0903">Direct protein sequencing</keyword>
<keyword id="KW-1017">Isopeptide bond</keyword>
<keyword id="KW-0539">Nucleus</keyword>
<keyword id="KW-0597">Phosphoprotein</keyword>
<keyword id="KW-0647">Proteasome</keyword>
<keyword id="KW-1185">Reference proteome</keyword>
<keyword id="KW-0832">Ubl conjugation</keyword>
<organism>
    <name type="scientific">Saccharomyces cerevisiae (strain ATCC 204508 / S288c)</name>
    <name type="common">Baker's yeast</name>
    <dbReference type="NCBI Taxonomy" id="559292"/>
    <lineage>
        <taxon>Eukaryota</taxon>
        <taxon>Fungi</taxon>
        <taxon>Dikarya</taxon>
        <taxon>Ascomycota</taxon>
        <taxon>Saccharomycotina</taxon>
        <taxon>Saccharomycetes</taxon>
        <taxon>Saccharomycetales</taxon>
        <taxon>Saccharomycetaceae</taxon>
        <taxon>Saccharomyces</taxon>
    </lineage>
</organism>